<name>NU5M_HUMAN</name>
<comment type="function">
    <text evidence="8">Core subunit of the mitochondrial membrane respiratory chain NADH dehydrogenase (Complex I) which catalyzes electron transfer from NADH through the respiratory chain, using ubiquinone as an electron acceptor (PubMed:15250827). Essential for the catalytic activity and assembly of complex I (PubMed:15250827).</text>
</comment>
<comment type="catalytic activity">
    <reaction evidence="8">
        <text>a ubiquinone + NADH + 5 H(+)(in) = a ubiquinol + NAD(+) + 4 H(+)(out)</text>
        <dbReference type="Rhea" id="RHEA:29091"/>
        <dbReference type="Rhea" id="RHEA-COMP:9565"/>
        <dbReference type="Rhea" id="RHEA-COMP:9566"/>
        <dbReference type="ChEBI" id="CHEBI:15378"/>
        <dbReference type="ChEBI" id="CHEBI:16389"/>
        <dbReference type="ChEBI" id="CHEBI:17976"/>
        <dbReference type="ChEBI" id="CHEBI:57540"/>
        <dbReference type="ChEBI" id="CHEBI:57945"/>
        <dbReference type="EC" id="7.1.1.2"/>
    </reaction>
</comment>
<comment type="subunit">
    <text evidence="6">Core subunit of respiratory chain NADH dehydrogenase (Complex I) which is composed of 45 different subunits.</text>
</comment>
<comment type="subcellular location">
    <subcellularLocation>
        <location evidence="1">Mitochondrion inner membrane</location>
        <topology evidence="2">Multi-pass membrane protein</topology>
    </subcellularLocation>
</comment>
<comment type="disease" evidence="10 11 14 17">
    <disease id="DI-00640">
        <name>Leber hereditary optic neuropathy</name>
        <acronym>LHON</acronym>
        <description>A maternally inherited form of Leber hereditary optic neuropathy, a mitochondrial disease resulting in bilateral painless loss of central vision due to selective degeneration of the retinal ganglion cells and their axons. The disorder shows incomplete penetrance and male predominance. Cardiac conduction defects and neurological defects have also been described in some LHON patients. LHON results from primary mitochondrial DNA mutations affecting the respiratory chain complexes.</description>
        <dbReference type="MIM" id="535000"/>
    </disease>
    <text>The disease is caused by variants affecting the gene represented in this entry.</text>
</comment>
<comment type="disease" evidence="4 7 12">
    <disease id="DI-01886">
        <name>Leigh syndrome</name>
        <acronym>LS</acronym>
        <description>An early-onset progressive neurodegenerative disorder characterized by the presence of focal, bilateral lesions in one or more areas of the central nervous system including the brainstem, thalamus, basal ganglia, cerebellum and spinal cord. Clinical features depend on which areas of the central nervous system are involved and include subacute onset of psychomotor retardation, hypotonia, ataxia, weakness, vision loss, eye movement abnormalities, seizures, and dysphagia.</description>
        <dbReference type="MIM" id="256000"/>
    </disease>
    <text>The disease is caused by variants affecting the gene represented in this entry.</text>
</comment>
<comment type="disease" evidence="5 9 12 18">
    <disease id="DI-01983">
        <name>Mitochondrial encephalomyopathy with lactic acidosis and stroke-like episodes syndrome</name>
        <acronym>MELAS</acronym>
        <description>Genetically heterogeneous disorder, characterized by episodic vomiting, seizures, and recurrent cerebral insults resembling strokes and causing hemiparesis, hemianopsia, or cortical blindness.</description>
        <dbReference type="MIM" id="540000"/>
    </disease>
    <text>The disease is caused by variants affecting the gene represented in this entry.</text>
</comment>
<comment type="similarity">
    <text evidence="20">Belongs to the complex I subunit 5 family.</text>
</comment>
<proteinExistence type="evidence at protein level"/>
<feature type="chain" id="PRO_0000118101" description="NADH-ubiquinone oxidoreductase chain 5">
    <location>
        <begin position="1"/>
        <end position="603"/>
    </location>
</feature>
<feature type="transmembrane region" description="Helical" evidence="2">
    <location>
        <begin position="38"/>
        <end position="58"/>
    </location>
</feature>
<feature type="transmembrane region" description="Helical" evidence="2">
    <location>
        <begin position="87"/>
        <end position="107"/>
    </location>
</feature>
<feature type="transmembrane region" description="Helical" evidence="2">
    <location>
        <begin position="122"/>
        <end position="142"/>
    </location>
</feature>
<feature type="transmembrane region" description="Helical" evidence="2">
    <location>
        <begin position="144"/>
        <end position="160"/>
    </location>
</feature>
<feature type="transmembrane region" description="Helical" evidence="2">
    <location>
        <begin position="171"/>
        <end position="191"/>
    </location>
</feature>
<feature type="transmembrane region" description="Helical" evidence="2">
    <location>
        <begin position="211"/>
        <end position="233"/>
    </location>
</feature>
<feature type="transmembrane region" description="Helical" evidence="2">
    <location>
        <begin position="241"/>
        <end position="261"/>
    </location>
</feature>
<feature type="transmembrane region" description="Helical" evidence="2">
    <location>
        <begin position="272"/>
        <end position="292"/>
    </location>
</feature>
<feature type="transmembrane region" description="Helical" evidence="2">
    <location>
        <begin position="301"/>
        <end position="320"/>
    </location>
</feature>
<feature type="transmembrane region" description="Helical" evidence="2">
    <location>
        <begin position="325"/>
        <end position="347"/>
    </location>
</feature>
<feature type="transmembrane region" description="Helical" evidence="2">
    <location>
        <begin position="370"/>
        <end position="390"/>
    </location>
</feature>
<feature type="transmembrane region" description="Helical" evidence="2">
    <location>
        <begin position="407"/>
        <end position="429"/>
    </location>
</feature>
<feature type="transmembrane region" description="Helical" evidence="2">
    <location>
        <begin position="458"/>
        <end position="478"/>
    </location>
</feature>
<feature type="transmembrane region" description="Helical" evidence="2">
    <location>
        <begin position="482"/>
        <end position="502"/>
    </location>
</feature>
<feature type="transmembrane region" description="Helical" evidence="2">
    <location>
        <begin position="582"/>
        <end position="602"/>
    </location>
</feature>
<feature type="sequence variant" id="VAR_008864" evidence="13">
    <original>P</original>
    <variation>S</variation>
    <location>
        <position position="17"/>
    </location>
</feature>
<feature type="sequence variant" id="VAR_008865" description="In dbSNP:rs1603223838." evidence="13">
    <original>F</original>
    <variation>S</variation>
    <location>
        <position position="95"/>
    </location>
</feature>
<feature type="sequence variant" id="VAR_008866" description="In dbSNP:rs1603223847." evidence="13">
    <original>S</original>
    <variation>P</variation>
    <location>
        <position position="99"/>
    </location>
</feature>
<feature type="sequence variant" id="VAR_035424" description="In LS; dbSNP:rs267606893." evidence="4">
    <original>F</original>
    <variation>L</variation>
    <location>
        <position position="124"/>
    </location>
</feature>
<feature type="sequence variant" id="VAR_035425" description="In MELAS; dbSNP:rs267606894." evidence="5">
    <original>E</original>
    <variation>G</variation>
    <location>
        <position position="145"/>
    </location>
</feature>
<feature type="sequence variant" id="VAR_008867" evidence="13">
    <original>G</original>
    <variation>D</variation>
    <location>
        <position position="146"/>
    </location>
</feature>
<feature type="sequence variant" id="VAR_008868" evidence="13">
    <original>A</original>
    <variation>V</variation>
    <location>
        <position position="160"/>
    </location>
</feature>
<feature type="sequence variant" id="VAR_008869" evidence="13">
    <original>N</original>
    <variation>S</variation>
    <location>
        <position position="165"/>
    </location>
</feature>
<feature type="sequence variant" id="VAR_035426" description="In LHON; dbSNP:rs267606899." evidence="10">
    <original>A</original>
    <variation>V</variation>
    <location>
        <position position="171"/>
    </location>
</feature>
<feature type="sequence variant" id="VAR_011357" description="In dbSNP:rs1556424197." evidence="16">
    <original>T</original>
    <variation>P</variation>
    <location>
        <position position="211"/>
    </location>
</feature>
<feature type="sequence variant" id="VAR_035427" description="In MELAS; dbSNP:rs267606898." evidence="9 12">
    <original>A</original>
    <variation>T</variation>
    <location>
        <position position="236"/>
    </location>
</feature>
<feature type="sequence variant" id="VAR_035428" description="In MELAS; disease features overlapping with Leber optic atrophy and Leigh syndrome; dbSNP:rs267606895." evidence="5">
    <original>M</original>
    <variation>L</variation>
    <location>
        <position position="237"/>
    </location>
</feature>
<feature type="sequence variant" id="VAR_035429" description="In LS; dbSNP:rs267606896." evidence="7">
    <original>S</original>
    <variation>C</variation>
    <location>
        <position position="250"/>
    </location>
</feature>
<feature type="sequence variant" id="VAR_064566" description="Found in a patient with mitochondrial complex I deficiency; uncertain significance; dbSNP:rs1603224029." evidence="15">
    <original>V</original>
    <variation>A</variation>
    <location>
        <position position="253"/>
    </location>
</feature>
<feature type="sequence variant" id="VAR_011358" description="In dbSNP:rs2853501." evidence="3 16">
    <original>I</original>
    <variation>V</variation>
    <location>
        <position position="257"/>
    </location>
</feature>
<feature type="sequence variant" id="VAR_008870" description="In dbSNP:rs1603224108." evidence="13">
    <original>F</original>
    <variation>S</variation>
    <location>
        <position position="304"/>
    </location>
</feature>
<feature type="sequence variant" id="VAR_011359" description="In dbSNP:rs2853502." evidence="16">
    <original>M</original>
    <variation>V</variation>
    <location>
        <position position="314"/>
    </location>
</feature>
<feature type="sequence variant" id="VAR_008871" description="In dbSNP:rs1556424263." evidence="13">
    <original>T</original>
    <variation>A</variation>
    <location>
        <position position="331"/>
    </location>
</feature>
<feature type="sequence variant" id="VAR_035430" description="In MELAS; dbSNP:rs267606897." evidence="12 18">
    <original>D</original>
    <variation>N</variation>
    <location>
        <position position="393"/>
    </location>
</feature>
<feature type="sequence variant" id="VAR_064567" description="Found in a patient with mitochondrial complex I deficiency; uncertain significance; dbSNP:rs1603224300." evidence="15">
    <original>N</original>
    <variation>S</variation>
    <location>
        <position position="447"/>
    </location>
</feature>
<feature type="sequence variant" id="VAR_004761" description="In LHON; secondary mutation; does not seem to directly cause the disease; dbSNP:rs28359178." evidence="11 14">
    <original>A</original>
    <variation>T</variation>
    <location>
        <position position="458"/>
    </location>
</feature>
<feature type="sequence variant" id="VAR_004762" description="In LHON; primary rare mutation; dbSNP:rs387906425." evidence="17">
    <original>G</original>
    <variation>E</variation>
    <location>
        <position position="465"/>
    </location>
</feature>
<feature type="sequence variant" id="VAR_008603" description="In dbSNP:rs386420024." evidence="19">
    <original>A</original>
    <variation>T</variation>
    <location>
        <position position="475"/>
    </location>
</feature>
<feature type="sequence variant" id="VAR_008872" evidence="13">
    <original>D</original>
    <variation>G</variation>
    <location>
        <position position="503"/>
    </location>
</feature>
<feature type="sequence conflict" description="In Ref. 1; CAA24036." evidence="20" ref="1">
    <original>R</original>
    <variation>G</variation>
    <location>
        <position position="456"/>
    </location>
</feature>
<reference key="1">
    <citation type="journal article" date="1981" name="Nature">
        <title>Sequence and organization of the human mitochondrial genome.</title>
        <authorList>
            <person name="Anderson S."/>
            <person name="Bankier A.T."/>
            <person name="Barrell B.G."/>
            <person name="de Bruijn M.H.L."/>
            <person name="Coulson A.R."/>
            <person name="Drouin J."/>
            <person name="Eperon I.C."/>
            <person name="Nierlich D.P."/>
            <person name="Roe B.A."/>
            <person name="Sanger F."/>
            <person name="Schreier P.H."/>
            <person name="Smith A.J.H."/>
            <person name="Staden R."/>
            <person name="Young I.G."/>
        </authorList>
    </citation>
    <scope>NUCLEOTIDE SEQUENCE [LARGE SCALE GENOMIC DNA]</scope>
</reference>
<reference key="2">
    <citation type="submission" date="1997-04" db="EMBL/GenBank/DDBJ databases">
        <authorList>
            <person name="Kogelnik A."/>
            <person name="Brown M."/>
        </authorList>
    </citation>
    <scope>SEQUENCE REVISION TO 456</scope>
</reference>
<reference key="3">
    <citation type="journal article" date="1995" name="Proc. Natl. Acad. Sci. U.S.A.">
        <title>Recent African origin of modern humans revealed by complete sequences of hominoid mitochondrial DNAs.</title>
        <authorList>
            <person name="Horai S."/>
            <person name="Hayasaka K."/>
            <person name="Kondo R."/>
            <person name="Tsugane K."/>
            <person name="Takahata N."/>
        </authorList>
    </citation>
    <scope>NUCLEOTIDE SEQUENCE [GENOMIC DNA]</scope>
    <scope>VARIANTS PRO-211; VAL-257 AND VAL-314</scope>
    <source>
        <tissue>Placenta</tissue>
    </source>
</reference>
<reference key="4">
    <citation type="journal article" date="2001" name="BMC Genet.">
        <title>Major genomic mitochondrial lineages delineate early human expansions.</title>
        <authorList>
            <person name="Maca-Meyer N."/>
            <person name="Gonzalez A.M."/>
            <person name="Larruga J.M."/>
            <person name="Flores C."/>
            <person name="Cabrera V.M."/>
        </authorList>
    </citation>
    <scope>NUCLEOTIDE SEQUENCE [GENOMIC DNA]</scope>
    <scope>VARIANT VAL-257</scope>
</reference>
<reference key="5">
    <citation type="journal article" date="2003" name="Mol. Biol. Evol.">
        <title>Lineage-specific selection in human mtDNA: lack of polymorphisms in a segment of MTND5 gene in haplogroup J.</title>
        <authorList>
            <person name="Moilanen J.S."/>
            <person name="Finnila S."/>
            <person name="Majamaa K."/>
        </authorList>
    </citation>
    <scope>NUCLEOTIDE SEQUENCE [GENOMIC DNA]</scope>
</reference>
<reference key="6">
    <citation type="journal article" date="2000" name="Nature">
        <title>Mitochondrial genome variation and the origin of modern humans.</title>
        <authorList>
            <person name="Ingman M."/>
            <person name="Kaessmann H."/>
            <person name="Paeaebo S."/>
            <person name="Gyllensten U."/>
        </authorList>
    </citation>
    <scope>NUCLEOTIDE SEQUENCE [GENOMIC DNA]</scope>
</reference>
<reference key="7">
    <citation type="journal article" date="2003" name="Genome Res.">
        <title>Mitochondrial genome variation and evolutionary history of Australian and New Guinean aborigines.</title>
        <authorList>
            <person name="Ingman M."/>
            <person name="Gyllensten U."/>
        </authorList>
    </citation>
    <scope>NUCLEOTIDE SEQUENCE [GENOMIC DNA]</scope>
</reference>
<reference key="8">
    <citation type="journal article" date="2004" name="Int. J. Legal Med.">
        <title>Single nucleotide polymorphisms over the entire mtDNA genome that increase the power of forensic testing in Caucasians.</title>
        <authorList>
            <person name="Coble M.D."/>
            <person name="Just R.S."/>
            <person name="O'Callaghan J.E."/>
            <person name="Letmanyi I.H."/>
            <person name="Peterson C.T."/>
            <person name="Irwin J.A."/>
            <person name="Parsons T.J."/>
        </authorList>
    </citation>
    <scope>NUCLEOTIDE SEQUENCE [GENOMIC DNA]</scope>
</reference>
<reference key="9">
    <citation type="journal article" date="1982" name="J. Mol. Evol.">
        <title>Mitochondrial DNA sequences of primates: tempo and mode of evolution.</title>
        <authorList>
            <person name="Brown W.M."/>
            <person name="Prager E.M."/>
            <person name="Wang A."/>
            <person name="Wilson A.C."/>
        </authorList>
    </citation>
    <scope>NUCLEOTIDE SEQUENCE [GENOMIC DNA] OF 1-79</scope>
</reference>
<reference key="10">
    <citation type="journal article" date="1985" name="Nature">
        <title>Six unidentified reading frames of human mitochondrial DNA encode components of the respiratory-chain NADH dehydrogenase.</title>
        <authorList>
            <person name="Chomyn A."/>
            <person name="Mariottini P."/>
            <person name="Cleeter M.W.J."/>
            <person name="Ragan C.I."/>
            <person name="Matsuno-Yagi A."/>
            <person name="Hatefi Y."/>
            <person name="Doolittle R.F."/>
            <person name="Attardi G."/>
        </authorList>
    </citation>
    <scope>IDENTIFICATION OF PROTEIN</scope>
</reference>
<reference key="11">
    <citation type="journal article" date="2003" name="J. Biol. Chem.">
        <title>The subunit composition of the human NADH dehydrogenase obtained by rapid one-step immunopurification.</title>
        <authorList>
            <person name="Murray J."/>
            <person name="Zhang B."/>
            <person name="Taylor S.W."/>
            <person name="Oglesbee D."/>
            <person name="Fahy E."/>
            <person name="Marusich M.F."/>
            <person name="Ghosh S.S."/>
            <person name="Capaldi R.A."/>
        </authorList>
    </citation>
    <scope>IDENTIFICATION IN THE NADH-UBIQUINONE OXIDOREDUCTASE COMPLEX</scope>
    <scope>IDENTIFICATION BY MASS SPECTROMETRY</scope>
</reference>
<reference key="12">
    <citation type="journal article" date="2004" name="Biochem. J.">
        <title>Structural organization of mitochondrial human complex I: role of the ND4 and ND5 mitochondria-encoded subunits and interaction with prohibitin.</title>
        <authorList>
            <person name="Bourges I."/>
            <person name="Ramus C."/>
            <person name="Mousson de Camaret B."/>
            <person name="Beugnot R."/>
            <person name="Remacle C."/>
            <person name="Cardol P."/>
            <person name="Hofhaus G."/>
            <person name="Issartel J.P."/>
        </authorList>
    </citation>
    <scope>FUNCTION</scope>
    <scope>CATALYTIC ACTIVITY</scope>
</reference>
<reference key="13">
    <citation type="journal article" date="2015" name="Proteomics">
        <title>N-terminome analysis of the human mitochondrial proteome.</title>
        <authorList>
            <person name="Vaca Jacome A.S."/>
            <person name="Rabilloud T."/>
            <person name="Schaeffer-Reiss C."/>
            <person name="Rompais M."/>
            <person name="Ayoub D."/>
            <person name="Lane L."/>
            <person name="Bairoch A."/>
            <person name="Van Dorsselaer A."/>
            <person name="Carapito C."/>
        </authorList>
    </citation>
    <scope>IDENTIFICATION BY MASS SPECTROMETRY [LARGE SCALE ANALYSIS]</scope>
</reference>
<reference key="14">
    <citation type="journal article" date="1991" name="Hum. Genet.">
        <title>Normal variants of human mitochondrial DNA and translation products: the building of a reference data base.</title>
        <authorList>
            <person name="Marzuki S."/>
            <person name="Noer A.S."/>
            <person name="Lertrit P."/>
            <person name="Thyagarajan D."/>
            <person name="Kapsa R."/>
            <person name="Utthanaphol P."/>
            <person name="Byrne E."/>
        </authorList>
    </citation>
    <scope>VARIANTS SER-17; SER-95; PRO-99; ASP-146; VAL-160; SER-165; SER-304; ALA-331 AND GLY-503</scope>
</reference>
<reference key="15">
    <citation type="journal article" date="1992" name="Genetics">
        <title>Mitochondrial DNA complex I and III mutations associated with Leber's hereditary optic neuropathy.</title>
        <authorList>
            <person name="Brown M.D."/>
            <person name="Voljavec A.S."/>
            <person name="Lott M.T."/>
            <person name="Torroni A."/>
            <person name="Yang C.C."/>
            <person name="Wallace D.C."/>
        </authorList>
    </citation>
    <scope>VARIANT LHON THR-458</scope>
</reference>
<reference key="16">
    <citation type="journal article" date="1991" name="Biochem. Biophys. Res. Commun.">
        <title>Alternative, simultaneous complex I mitochondrial DNA mutations in Leber's hereditary optic neuropathy.</title>
        <authorList>
            <person name="Johns D.R."/>
            <person name="Berman J."/>
        </authorList>
    </citation>
    <scope>VARIANT LHON THR-458</scope>
</reference>
<reference key="17">
    <citation type="journal article" date="1993" name="Am. J. Hum. Genet.">
        <title>When does bilateral optic atrophy become Leber hereditary optic neuropathy?</title>
        <authorList>
            <person name="Howell N."/>
            <person name="Halvorson S."/>
            <person name="Burns J."/>
            <person name="McCullough D.A."/>
            <person name="Poulton J."/>
        </authorList>
    </citation>
    <scope>VARIANT LHON GLU-465</scope>
</reference>
<reference key="18">
    <citation type="journal article" date="1997" name="Biochem. Biophys. Res. Commun.">
        <title>Identification of a novel mutation in the mtDNA ND5 gene associated with MELAS.</title>
        <authorList>
            <person name="Santorelli F.M."/>
            <person name="Tanji K."/>
            <person name="Kulikova R."/>
            <person name="Shanske S."/>
            <person name="Vilarinho L."/>
            <person name="Hays A.P."/>
            <person name="DiMauro S."/>
        </authorList>
    </citation>
    <scope>VARIANT MELAS ASN-393</scope>
</reference>
<reference key="19">
    <citation type="journal article" date="1998" name="Nucleic Acids Res.">
        <title>Automating the identification of DNA variations using quality-based fluorescence re-sequencing: analysis of the human mitochondrial genome.</title>
        <authorList>
            <person name="Rieder M.J."/>
            <person name="Taylor S.L."/>
            <person name="Tobe V.O."/>
            <person name="Nickerson D.A."/>
        </authorList>
    </citation>
    <scope>VARIANT THR-475</scope>
</reference>
<reference key="20">
    <citation type="journal article" date="2002" name="Eur. J. Hum. Genet.">
        <title>Leigh disease associated with a novel mitochondrial DNA ND5 mutation.</title>
        <authorList>
            <person name="Taylor R.W."/>
            <person name="Morris A.A.M."/>
            <person name="Hutchinson M."/>
            <person name="Turnbull D.M."/>
        </authorList>
    </citation>
    <scope>VARIANT LS LEU-124</scope>
</reference>
<reference key="21">
    <citation type="journal article" date="2003" name="Ann. Neurol.">
        <title>Is the mitochondrial complex I ND5 gene a hot-spot for MELAS causing mutations?</title>
        <authorList>
            <person name="Liolitsa D."/>
            <person name="Rahman S."/>
            <person name="Benton S."/>
            <person name="Carr L.J."/>
            <person name="Hanna M.G."/>
        </authorList>
    </citation>
    <scope>VARIANTS MELAS GLY-145 AND LEU-237</scope>
</reference>
<reference key="22">
    <citation type="journal article" date="2003" name="Neurology">
        <title>A missense mutation in the mitochondrial ND5 gene associated with a Leigh-MELAS overlap syndrome.</title>
        <authorList>
            <person name="Crimi M."/>
            <person name="Galbiati S."/>
            <person name="Moroni I."/>
            <person name="Bordoni A."/>
            <person name="Perini M.P."/>
            <person name="Lamantea E."/>
            <person name="Sciacco M."/>
            <person name="Zeviani M."/>
            <person name="Biunno I."/>
            <person name="Moggio M."/>
            <person name="Scarlato G."/>
            <person name="Comi G.P."/>
        </authorList>
    </citation>
    <scope>VARIANT LS CYS-250</scope>
</reference>
<reference key="23">
    <citation type="journal article" date="2005" name="Ann. Neurol.">
        <title>The role of the ND5 gene in LHON: characterization of a new, heteroplasmic LHON mutation.</title>
        <authorList>
            <person name="Mayorov V."/>
            <person name="Biousse V."/>
            <person name="Newman N.J."/>
            <person name="Brown M.D."/>
        </authorList>
    </citation>
    <scope>VARIANT LHON VAL-171</scope>
</reference>
<reference key="24">
    <citation type="journal article" date="2005" name="Arch. Neurol.">
        <title>Novel mitochondrial DNA ND5 mutation in a patient with clinical features of MELAS and MERRF.</title>
        <authorList>
            <person name="Naini A.B."/>
            <person name="Lu J."/>
            <person name="Kaufmann P."/>
            <person name="Bernstein R.A."/>
            <person name="Mancuso M."/>
            <person name="Bonilla E."/>
            <person name="Hirano M."/>
            <person name="DiMauro S."/>
        </authorList>
    </citation>
    <scope>VARIANT MELAS THR-236</scope>
</reference>
<reference key="25">
    <citation type="journal article" date="2007" name="J. Med. Genet.">
        <title>Mutations in the ND5 subunit of complex I of the mitochondrial DNA are a frequent cause of oxidative phosphorylation disease.</title>
        <authorList>
            <person name="Blok M.J."/>
            <person name="Spruijt L."/>
            <person name="de Coo I.F.M."/>
            <person name="Schoonderwoerd K."/>
            <person name="Hendrickx A."/>
            <person name="Smeets H.J."/>
        </authorList>
    </citation>
    <scope>VARIANTS MELAS THR-236 AND ASN-393</scope>
</reference>
<reference key="26">
    <citation type="journal article" date="2010" name="Nat. Genet.">
        <title>High-throughput, pooled sequencing identifies mutations in NUBPL and FOXRED1 in human complex I deficiency.</title>
        <authorList>
            <person name="Calvo S.E."/>
            <person name="Tucker E.J."/>
            <person name="Compton A.G."/>
            <person name="Kirby D.M."/>
            <person name="Crawford G."/>
            <person name="Burtt N.P."/>
            <person name="Rivas M."/>
            <person name="Guiducci C."/>
            <person name="Bruno D.L."/>
            <person name="Goldberger O.A."/>
            <person name="Redman M.C."/>
            <person name="Wiltshire E."/>
            <person name="Wilson C.J."/>
            <person name="Altshuler D."/>
            <person name="Gabriel S.B."/>
            <person name="Daly M.J."/>
            <person name="Thorburn D.R."/>
            <person name="Mootha V.K."/>
        </authorList>
    </citation>
    <scope>VARIANTS ALA-253 AND SER-447</scope>
</reference>
<evidence type="ECO:0000250" key="1">
    <source>
        <dbReference type="UniProtKB" id="P03920"/>
    </source>
</evidence>
<evidence type="ECO:0000255" key="2"/>
<evidence type="ECO:0000269" key="3">
    <source>
    </source>
</evidence>
<evidence type="ECO:0000269" key="4">
    <source>
    </source>
</evidence>
<evidence type="ECO:0000269" key="5">
    <source>
    </source>
</evidence>
<evidence type="ECO:0000269" key="6">
    <source>
    </source>
</evidence>
<evidence type="ECO:0000269" key="7">
    <source>
    </source>
</evidence>
<evidence type="ECO:0000269" key="8">
    <source>
    </source>
</evidence>
<evidence type="ECO:0000269" key="9">
    <source>
    </source>
</evidence>
<evidence type="ECO:0000269" key="10">
    <source>
    </source>
</evidence>
<evidence type="ECO:0000269" key="11">
    <source>
    </source>
</evidence>
<evidence type="ECO:0000269" key="12">
    <source>
    </source>
</evidence>
<evidence type="ECO:0000269" key="13">
    <source>
    </source>
</evidence>
<evidence type="ECO:0000269" key="14">
    <source>
    </source>
</evidence>
<evidence type="ECO:0000269" key="15">
    <source>
    </source>
</evidence>
<evidence type="ECO:0000269" key="16">
    <source>
    </source>
</evidence>
<evidence type="ECO:0000269" key="17">
    <source>
    </source>
</evidence>
<evidence type="ECO:0000269" key="18">
    <source>
    </source>
</evidence>
<evidence type="ECO:0000269" key="19">
    <source>
    </source>
</evidence>
<evidence type="ECO:0000305" key="20"/>
<sequence length="603" mass="67027">MTMHTTMTTLTLTSLIPPILTTLVNPNKKNSYPHYVKSIVASTFIISLFPTTMFMCLDQEVIISNWHWATTQTTQLSLSFKLDYFSMMFIPVALFVTWSIMEFSLWYMNSDPNINQFFKYLLIFLITMLILVTANNLFQLFIGWEGVGIMSFLLISWWYARADANTAAIQAILYNRIGDIGFILALAWFILHSNSWDPQQMALLNANPSLTPLLGLLLAAAGKSAQLGLHPWLPSAMEGPTPVSALLHSSTMVVAGIFLLIRFHPLAENSPLIQTLTLCLGAITTLFAAVCALTQNDIKKIVAFSTSSQLGLMMVTIGINQPHLAFLHICTHAFFKAMLFMCSGSIIHNLNNEQDIRKMGGLLKTMPLTSTSLTIGSLALAGMPFLTGFYSKDHIIETANMSYTNAWALSITLIATSLTSAYSTRMILLTLTGQPRFPTLTNINENNPTLLNPIKRLAAGSLFAGFLITNNISPASPFQTTIPLYLKLTALAVTFLGLLTALDLNYLTNKLKMKSPLCTFYFSNMLGFYPSITHRTIPYLGLLTSQNLPLLLLDLTWLEKLLPKTISQHQISTSIITSTQKGMIKLYFLSFFFPLILTLLLIT</sequence>
<keyword id="KW-0002">3D-structure</keyword>
<keyword id="KW-0225">Disease variant</keyword>
<keyword id="KW-0249">Electron transport</keyword>
<keyword id="KW-0429">Leber hereditary optic neuropathy</keyword>
<keyword id="KW-0431">Leigh syndrome</keyword>
<keyword id="KW-0867">MELAS syndrome</keyword>
<keyword id="KW-0472">Membrane</keyword>
<keyword id="KW-0496">Mitochondrion</keyword>
<keyword id="KW-0999">Mitochondrion inner membrane</keyword>
<keyword id="KW-0520">NAD</keyword>
<keyword id="KW-1274">Primary mitochondrial disease</keyword>
<keyword id="KW-1267">Proteomics identification</keyword>
<keyword id="KW-1185">Reference proteome</keyword>
<keyword id="KW-0679">Respiratory chain</keyword>
<keyword id="KW-1278">Translocase</keyword>
<keyword id="KW-0812">Transmembrane</keyword>
<keyword id="KW-1133">Transmembrane helix</keyword>
<keyword id="KW-0813">Transport</keyword>
<keyword id="KW-0830">Ubiquinone</keyword>
<gene>
    <name type="primary">MT-ND5</name>
    <name type="synonym">MTND5</name>
    <name type="synonym">NADH5</name>
    <name type="synonym">ND5</name>
</gene>
<protein>
    <recommendedName>
        <fullName>NADH-ubiquinone oxidoreductase chain 5</fullName>
        <ecNumber evidence="8">7.1.1.2</ecNumber>
    </recommendedName>
    <alternativeName>
        <fullName>NADH dehydrogenase subunit 5</fullName>
    </alternativeName>
</protein>
<geneLocation type="mitochondrion"/>
<dbReference type="EC" id="7.1.1.2" evidence="8"/>
<dbReference type="EMBL" id="J01415">
    <property type="protein sequence ID" value="AAB58953.1"/>
    <property type="molecule type" value="Genomic_DNA"/>
</dbReference>
<dbReference type="EMBL" id="V00662">
    <property type="protein sequence ID" value="CAA24036.1"/>
    <property type="molecule type" value="Genomic_DNA"/>
</dbReference>
<dbReference type="EMBL" id="D38112">
    <property type="protein sequence ID" value="BAA07297.1"/>
    <property type="molecule type" value="Genomic_DNA"/>
</dbReference>
<dbReference type="EMBL" id="AF465942">
    <property type="protein sequence ID" value="AAN14557.1"/>
    <property type="molecule type" value="Genomic_DNA"/>
</dbReference>
<dbReference type="EMBL" id="AY339402">
    <property type="protein sequence ID" value="AAP89046.1"/>
    <property type="molecule type" value="Genomic_DNA"/>
</dbReference>
<dbReference type="EMBL" id="AY339403">
    <property type="protein sequence ID" value="AAP89059.1"/>
    <property type="molecule type" value="Genomic_DNA"/>
</dbReference>
<dbReference type="EMBL" id="AY339404">
    <property type="protein sequence ID" value="AAP89072.1"/>
    <property type="molecule type" value="Genomic_DNA"/>
</dbReference>
<dbReference type="EMBL" id="AY339405">
    <property type="protein sequence ID" value="AAP89085.1"/>
    <property type="molecule type" value="Genomic_DNA"/>
</dbReference>
<dbReference type="EMBL" id="AY339406">
    <property type="protein sequence ID" value="AAP89098.1"/>
    <property type="molecule type" value="Genomic_DNA"/>
</dbReference>
<dbReference type="EMBL" id="AY339407">
    <property type="protein sequence ID" value="AAP89111.1"/>
    <property type="molecule type" value="Genomic_DNA"/>
</dbReference>
<dbReference type="EMBL" id="AY339408">
    <property type="protein sequence ID" value="AAP89124.1"/>
    <property type="molecule type" value="Genomic_DNA"/>
</dbReference>
<dbReference type="EMBL" id="AY339409">
    <property type="protein sequence ID" value="AAP89137.1"/>
    <property type="molecule type" value="Genomic_DNA"/>
</dbReference>
<dbReference type="EMBL" id="AY339410">
    <property type="protein sequence ID" value="AAP89150.1"/>
    <property type="molecule type" value="Genomic_DNA"/>
</dbReference>
<dbReference type="EMBL" id="AY339411">
    <property type="protein sequence ID" value="AAP89163.1"/>
    <property type="molecule type" value="Genomic_DNA"/>
</dbReference>
<dbReference type="EMBL" id="AY339412">
    <property type="protein sequence ID" value="AAP89176.1"/>
    <property type="molecule type" value="Genomic_DNA"/>
</dbReference>
<dbReference type="EMBL" id="AY339413">
    <property type="protein sequence ID" value="AAP89189.1"/>
    <property type="molecule type" value="Genomic_DNA"/>
</dbReference>
<dbReference type="EMBL" id="AY339414">
    <property type="protein sequence ID" value="AAP89202.1"/>
    <property type="molecule type" value="Genomic_DNA"/>
</dbReference>
<dbReference type="EMBL" id="AY339415">
    <property type="protein sequence ID" value="AAP89215.1"/>
    <property type="molecule type" value="Genomic_DNA"/>
</dbReference>
<dbReference type="EMBL" id="AY339416">
    <property type="protein sequence ID" value="AAP89228.1"/>
    <property type="molecule type" value="Genomic_DNA"/>
</dbReference>
<dbReference type="EMBL" id="AY339417">
    <property type="protein sequence ID" value="AAP89241.1"/>
    <property type="molecule type" value="Genomic_DNA"/>
</dbReference>
<dbReference type="EMBL" id="AY339418">
    <property type="protein sequence ID" value="AAP89254.1"/>
    <property type="molecule type" value="Genomic_DNA"/>
</dbReference>
<dbReference type="EMBL" id="AY339419">
    <property type="protein sequence ID" value="AAP89267.1"/>
    <property type="molecule type" value="Genomic_DNA"/>
</dbReference>
<dbReference type="EMBL" id="AY339420">
    <property type="protein sequence ID" value="AAP89280.1"/>
    <property type="molecule type" value="Genomic_DNA"/>
</dbReference>
<dbReference type="EMBL" id="AY339421">
    <property type="protein sequence ID" value="AAP89293.1"/>
    <property type="molecule type" value="Genomic_DNA"/>
</dbReference>
<dbReference type="EMBL" id="AY339422">
    <property type="protein sequence ID" value="AAP89306.1"/>
    <property type="molecule type" value="Genomic_DNA"/>
</dbReference>
<dbReference type="EMBL" id="AY339423">
    <property type="protein sequence ID" value="AAP89319.1"/>
    <property type="molecule type" value="Genomic_DNA"/>
</dbReference>
<dbReference type="EMBL" id="AY339424">
    <property type="protein sequence ID" value="AAP89332.1"/>
    <property type="molecule type" value="Genomic_DNA"/>
</dbReference>
<dbReference type="EMBL" id="AY339425">
    <property type="protein sequence ID" value="AAP89345.1"/>
    <property type="molecule type" value="Genomic_DNA"/>
</dbReference>
<dbReference type="EMBL" id="AY339426">
    <property type="protein sequence ID" value="AAP89358.1"/>
    <property type="molecule type" value="Genomic_DNA"/>
</dbReference>
<dbReference type="EMBL" id="AY339427">
    <property type="protein sequence ID" value="AAP89371.1"/>
    <property type="molecule type" value="Genomic_DNA"/>
</dbReference>
<dbReference type="EMBL" id="AY339428">
    <property type="protein sequence ID" value="AAP89384.1"/>
    <property type="molecule type" value="Genomic_DNA"/>
</dbReference>
<dbReference type="EMBL" id="AY339429">
    <property type="protein sequence ID" value="AAP89397.1"/>
    <property type="molecule type" value="Genomic_DNA"/>
</dbReference>
<dbReference type="EMBL" id="AY339430">
    <property type="protein sequence ID" value="AAP89410.1"/>
    <property type="molecule type" value="Genomic_DNA"/>
</dbReference>
<dbReference type="EMBL" id="AY339431">
    <property type="protein sequence ID" value="AAP89423.1"/>
    <property type="molecule type" value="Genomic_DNA"/>
</dbReference>
<dbReference type="EMBL" id="AY339432">
    <property type="protein sequence ID" value="AAP89436.1"/>
    <property type="molecule type" value="Genomic_DNA"/>
</dbReference>
<dbReference type="EMBL" id="AY339433">
    <property type="protein sequence ID" value="AAP89449.1"/>
    <property type="molecule type" value="Genomic_DNA"/>
</dbReference>
<dbReference type="EMBL" id="AY339434">
    <property type="protein sequence ID" value="AAP89462.1"/>
    <property type="molecule type" value="Genomic_DNA"/>
</dbReference>
<dbReference type="EMBL" id="AY339435">
    <property type="protein sequence ID" value="AAP89475.1"/>
    <property type="molecule type" value="Genomic_DNA"/>
</dbReference>
<dbReference type="EMBL" id="AY339436">
    <property type="protein sequence ID" value="AAP89488.1"/>
    <property type="molecule type" value="Genomic_DNA"/>
</dbReference>
<dbReference type="EMBL" id="AY339437">
    <property type="protein sequence ID" value="AAP89501.1"/>
    <property type="molecule type" value="Genomic_DNA"/>
</dbReference>
<dbReference type="EMBL" id="AY339438">
    <property type="protein sequence ID" value="AAP89514.1"/>
    <property type="molecule type" value="Genomic_DNA"/>
</dbReference>
<dbReference type="EMBL" id="AY339439">
    <property type="protein sequence ID" value="AAP89527.1"/>
    <property type="molecule type" value="Genomic_DNA"/>
</dbReference>
<dbReference type="EMBL" id="AY339440">
    <property type="protein sequence ID" value="AAP89540.1"/>
    <property type="molecule type" value="Genomic_DNA"/>
</dbReference>
<dbReference type="EMBL" id="AY339441">
    <property type="protein sequence ID" value="AAP89553.1"/>
    <property type="molecule type" value="Genomic_DNA"/>
</dbReference>
<dbReference type="EMBL" id="AY339442">
    <property type="protein sequence ID" value="AAP89566.1"/>
    <property type="molecule type" value="Genomic_DNA"/>
</dbReference>
<dbReference type="EMBL" id="AY339443">
    <property type="protein sequence ID" value="AAP89579.1"/>
    <property type="molecule type" value="Genomic_DNA"/>
</dbReference>
<dbReference type="EMBL" id="AY339444">
    <property type="protein sequence ID" value="AAP89592.1"/>
    <property type="molecule type" value="Genomic_DNA"/>
</dbReference>
<dbReference type="EMBL" id="AY339445">
    <property type="protein sequence ID" value="AAP89605.1"/>
    <property type="molecule type" value="Genomic_DNA"/>
</dbReference>
<dbReference type="EMBL" id="AY339446">
    <property type="protein sequence ID" value="AAP89618.1"/>
    <property type="molecule type" value="Genomic_DNA"/>
</dbReference>
<dbReference type="EMBL" id="AY339447">
    <property type="protein sequence ID" value="AAP89631.1"/>
    <property type="molecule type" value="Genomic_DNA"/>
</dbReference>
<dbReference type="EMBL" id="AY339448">
    <property type="protein sequence ID" value="AAP89644.1"/>
    <property type="molecule type" value="Genomic_DNA"/>
</dbReference>
<dbReference type="EMBL" id="AY339449">
    <property type="protein sequence ID" value="AAP89657.1"/>
    <property type="molecule type" value="Genomic_DNA"/>
</dbReference>
<dbReference type="EMBL" id="AY339451">
    <property type="protein sequence ID" value="AAP89683.1"/>
    <property type="molecule type" value="Genomic_DNA"/>
</dbReference>
<dbReference type="EMBL" id="AY339452">
    <property type="protein sequence ID" value="AAP89696.1"/>
    <property type="molecule type" value="Genomic_DNA"/>
</dbReference>
<dbReference type="EMBL" id="AY339453">
    <property type="protein sequence ID" value="AAP89709.1"/>
    <property type="molecule type" value="Genomic_DNA"/>
</dbReference>
<dbReference type="EMBL" id="AY339454">
    <property type="protein sequence ID" value="AAP89722.1"/>
    <property type="molecule type" value="Genomic_DNA"/>
</dbReference>
<dbReference type="EMBL" id="AY339455">
    <property type="protein sequence ID" value="AAP89735.1"/>
    <property type="molecule type" value="Genomic_DNA"/>
</dbReference>
<dbReference type="EMBL" id="AY339456">
    <property type="protein sequence ID" value="AAP89748.1"/>
    <property type="molecule type" value="Genomic_DNA"/>
</dbReference>
<dbReference type="EMBL" id="AY339457">
    <property type="protein sequence ID" value="AAP89761.1"/>
    <property type="molecule type" value="Genomic_DNA"/>
</dbReference>
<dbReference type="EMBL" id="AY339458">
    <property type="protein sequence ID" value="AAP89774.1"/>
    <property type="molecule type" value="Genomic_DNA"/>
</dbReference>
<dbReference type="EMBL" id="AY339459">
    <property type="protein sequence ID" value="AAP89787.1"/>
    <property type="molecule type" value="Genomic_DNA"/>
</dbReference>
<dbReference type="EMBL" id="AY339460">
    <property type="protein sequence ID" value="AAP89800.1"/>
    <property type="molecule type" value="Genomic_DNA"/>
</dbReference>
<dbReference type="EMBL" id="AY339461">
    <property type="protein sequence ID" value="AAP89813.1"/>
    <property type="molecule type" value="Genomic_DNA"/>
</dbReference>
<dbReference type="EMBL" id="AY339462">
    <property type="protein sequence ID" value="AAP89826.1"/>
    <property type="molecule type" value="Genomic_DNA"/>
</dbReference>
<dbReference type="EMBL" id="AY339463">
    <property type="protein sequence ID" value="AAP89839.1"/>
    <property type="molecule type" value="Genomic_DNA"/>
</dbReference>
<dbReference type="EMBL" id="AY339464">
    <property type="protein sequence ID" value="AAP89852.1"/>
    <property type="molecule type" value="Genomic_DNA"/>
</dbReference>
<dbReference type="EMBL" id="AY339465">
    <property type="protein sequence ID" value="AAP89865.1"/>
    <property type="molecule type" value="Genomic_DNA"/>
</dbReference>
<dbReference type="EMBL" id="AY339466">
    <property type="protein sequence ID" value="AAP89878.1"/>
    <property type="molecule type" value="Genomic_DNA"/>
</dbReference>
<dbReference type="EMBL" id="AY339467">
    <property type="protein sequence ID" value="AAP89891.1"/>
    <property type="molecule type" value="Genomic_DNA"/>
</dbReference>
<dbReference type="EMBL" id="AY339468">
    <property type="protein sequence ID" value="AAP89904.1"/>
    <property type="molecule type" value="Genomic_DNA"/>
</dbReference>
<dbReference type="EMBL" id="AY339469">
    <property type="protein sequence ID" value="AAP89917.1"/>
    <property type="molecule type" value="Genomic_DNA"/>
</dbReference>
<dbReference type="EMBL" id="AY339470">
    <property type="protein sequence ID" value="AAP89930.1"/>
    <property type="molecule type" value="Genomic_DNA"/>
</dbReference>
<dbReference type="EMBL" id="AY339471">
    <property type="protein sequence ID" value="AAP89943.1"/>
    <property type="molecule type" value="Genomic_DNA"/>
</dbReference>
<dbReference type="EMBL" id="AY339472">
    <property type="protein sequence ID" value="AAP89956.1"/>
    <property type="molecule type" value="Genomic_DNA"/>
</dbReference>
<dbReference type="EMBL" id="AY339473">
    <property type="protein sequence ID" value="AAP89969.1"/>
    <property type="molecule type" value="Genomic_DNA"/>
</dbReference>
<dbReference type="EMBL" id="AY339474">
    <property type="protein sequence ID" value="AAP89982.1"/>
    <property type="molecule type" value="Genomic_DNA"/>
</dbReference>
<dbReference type="EMBL" id="AY339475">
    <property type="protein sequence ID" value="AAP89995.1"/>
    <property type="molecule type" value="Genomic_DNA"/>
</dbReference>
<dbReference type="EMBL" id="AY339476">
    <property type="protein sequence ID" value="AAP90008.1"/>
    <property type="molecule type" value="Genomic_DNA"/>
</dbReference>
<dbReference type="EMBL" id="AY339477">
    <property type="protein sequence ID" value="AAP90021.1"/>
    <property type="molecule type" value="Genomic_DNA"/>
</dbReference>
<dbReference type="EMBL" id="AY339478">
    <property type="protein sequence ID" value="AAP90034.1"/>
    <property type="molecule type" value="Genomic_DNA"/>
</dbReference>
<dbReference type="EMBL" id="AY339479">
    <property type="protein sequence ID" value="AAP90047.1"/>
    <property type="molecule type" value="Genomic_DNA"/>
</dbReference>
<dbReference type="EMBL" id="AY339480">
    <property type="protein sequence ID" value="AAP90060.1"/>
    <property type="molecule type" value="Genomic_DNA"/>
</dbReference>
<dbReference type="EMBL" id="AY339481">
    <property type="protein sequence ID" value="AAP90073.1"/>
    <property type="molecule type" value="Genomic_DNA"/>
</dbReference>
<dbReference type="EMBL" id="AY339482">
    <property type="protein sequence ID" value="AAP90086.1"/>
    <property type="molecule type" value="Genomic_DNA"/>
</dbReference>
<dbReference type="EMBL" id="AY339483">
    <property type="protein sequence ID" value="AAP90099.1"/>
    <property type="molecule type" value="Genomic_DNA"/>
</dbReference>
<dbReference type="EMBL" id="AY339484">
    <property type="protein sequence ID" value="AAP90112.1"/>
    <property type="molecule type" value="Genomic_DNA"/>
</dbReference>
<dbReference type="EMBL" id="AY339485">
    <property type="protein sequence ID" value="AAP90125.1"/>
    <property type="molecule type" value="Genomic_DNA"/>
</dbReference>
<dbReference type="EMBL" id="AY339486">
    <property type="protein sequence ID" value="AAP90138.1"/>
    <property type="molecule type" value="Genomic_DNA"/>
</dbReference>
<dbReference type="EMBL" id="AY339487">
    <property type="protein sequence ID" value="AAP90151.1"/>
    <property type="molecule type" value="Genomic_DNA"/>
</dbReference>
<dbReference type="EMBL" id="AY339488">
    <property type="protein sequence ID" value="AAP90164.1"/>
    <property type="molecule type" value="Genomic_DNA"/>
</dbReference>
<dbReference type="EMBL" id="AY339489">
    <property type="protein sequence ID" value="AAP90177.1"/>
    <property type="molecule type" value="Genomic_DNA"/>
</dbReference>
<dbReference type="EMBL" id="AY339490">
    <property type="protein sequence ID" value="AAP90190.1"/>
    <property type="molecule type" value="Genomic_DNA"/>
</dbReference>
<dbReference type="EMBL" id="AY339491">
    <property type="protein sequence ID" value="AAP90203.1"/>
    <property type="molecule type" value="Genomic_DNA"/>
</dbReference>
<dbReference type="EMBL" id="AY339492">
    <property type="protein sequence ID" value="AAP90216.1"/>
    <property type="molecule type" value="Genomic_DNA"/>
</dbReference>
<dbReference type="EMBL" id="AY339493">
    <property type="protein sequence ID" value="AAP90229.1"/>
    <property type="molecule type" value="Genomic_DNA"/>
</dbReference>
<dbReference type="EMBL" id="AY339494">
    <property type="protein sequence ID" value="AAP90242.1"/>
    <property type="molecule type" value="Genomic_DNA"/>
</dbReference>
<dbReference type="EMBL" id="AY339495">
    <property type="protein sequence ID" value="AAP90255.1"/>
    <property type="molecule type" value="Genomic_DNA"/>
</dbReference>
<dbReference type="EMBL" id="AY339496">
    <property type="protein sequence ID" value="AAP90268.1"/>
    <property type="molecule type" value="Genomic_DNA"/>
</dbReference>
<dbReference type="EMBL" id="AY339514">
    <property type="protein sequence ID" value="AAP90502.1"/>
    <property type="molecule type" value="Genomic_DNA"/>
</dbReference>
<dbReference type="EMBL" id="AY339515">
    <property type="protein sequence ID" value="AAP90515.1"/>
    <property type="molecule type" value="Genomic_DNA"/>
</dbReference>
<dbReference type="EMBL" id="AY339516">
    <property type="protein sequence ID" value="AAP90528.1"/>
    <property type="molecule type" value="Genomic_DNA"/>
</dbReference>
<dbReference type="EMBL" id="AY339517">
    <property type="protein sequence ID" value="AAP90541.1"/>
    <property type="molecule type" value="Genomic_DNA"/>
</dbReference>
<dbReference type="EMBL" id="AY339518">
    <property type="protein sequence ID" value="AAP90554.1"/>
    <property type="molecule type" value="Genomic_DNA"/>
</dbReference>
<dbReference type="EMBL" id="AY339519">
    <property type="protein sequence ID" value="AAP90567.1"/>
    <property type="molecule type" value="Genomic_DNA"/>
</dbReference>
<dbReference type="EMBL" id="AY339520">
    <property type="protein sequence ID" value="AAP90580.1"/>
    <property type="molecule type" value="Genomic_DNA"/>
</dbReference>
<dbReference type="EMBL" id="AY339521">
    <property type="protein sequence ID" value="AAP90593.1"/>
    <property type="molecule type" value="Genomic_DNA"/>
</dbReference>
<dbReference type="EMBL" id="AY339522">
    <property type="protein sequence ID" value="AAP90606.1"/>
    <property type="molecule type" value="Genomic_DNA"/>
</dbReference>
<dbReference type="EMBL" id="AY339523">
    <property type="protein sequence ID" value="AAP90619.1"/>
    <property type="molecule type" value="Genomic_DNA"/>
</dbReference>
<dbReference type="EMBL" id="AY339528">
    <property type="protein sequence ID" value="AAP90684.1"/>
    <property type="molecule type" value="Genomic_DNA"/>
</dbReference>
<dbReference type="EMBL" id="AY339529">
    <property type="protein sequence ID" value="AAP90697.1"/>
    <property type="molecule type" value="Genomic_DNA"/>
</dbReference>
<dbReference type="EMBL" id="AY339530">
    <property type="protein sequence ID" value="AAP90710.1"/>
    <property type="molecule type" value="Genomic_DNA"/>
</dbReference>
<dbReference type="EMBL" id="AY339531">
    <property type="protein sequence ID" value="AAP90723.1"/>
    <property type="molecule type" value="Genomic_DNA"/>
</dbReference>
<dbReference type="EMBL" id="AY339532">
    <property type="protein sequence ID" value="AAP90736.1"/>
    <property type="molecule type" value="Genomic_DNA"/>
</dbReference>
<dbReference type="EMBL" id="AY339533">
    <property type="protein sequence ID" value="AAP90749.1"/>
    <property type="molecule type" value="Genomic_DNA"/>
</dbReference>
<dbReference type="EMBL" id="AY339534">
    <property type="protein sequence ID" value="AAP90762.1"/>
    <property type="molecule type" value="Genomic_DNA"/>
</dbReference>
<dbReference type="EMBL" id="AY339535">
    <property type="protein sequence ID" value="AAP90775.1"/>
    <property type="molecule type" value="Genomic_DNA"/>
</dbReference>
<dbReference type="EMBL" id="AY339536">
    <property type="protein sequence ID" value="AAP90788.1"/>
    <property type="molecule type" value="Genomic_DNA"/>
</dbReference>
<dbReference type="EMBL" id="AY339537">
    <property type="protein sequence ID" value="AAP90801.1"/>
    <property type="molecule type" value="Genomic_DNA"/>
</dbReference>
<dbReference type="EMBL" id="AY339538">
    <property type="protein sequence ID" value="AAP90814.1"/>
    <property type="molecule type" value="Genomic_DNA"/>
</dbReference>
<dbReference type="EMBL" id="AY339539">
    <property type="protein sequence ID" value="AAP90827.1"/>
    <property type="molecule type" value="Genomic_DNA"/>
</dbReference>
<dbReference type="EMBL" id="AY339540">
    <property type="protein sequence ID" value="AAP90840.1"/>
    <property type="molecule type" value="Genomic_DNA"/>
</dbReference>
<dbReference type="EMBL" id="AY339541">
    <property type="protein sequence ID" value="AAP90853.1"/>
    <property type="molecule type" value="Genomic_DNA"/>
</dbReference>
<dbReference type="EMBL" id="AY339542">
    <property type="protein sequence ID" value="AAP90866.1"/>
    <property type="molecule type" value="Genomic_DNA"/>
</dbReference>
<dbReference type="EMBL" id="AY339543">
    <property type="protein sequence ID" value="AAP90879.1"/>
    <property type="molecule type" value="Genomic_DNA"/>
</dbReference>
<dbReference type="EMBL" id="AY339547">
    <property type="protein sequence ID" value="AAP90931.1"/>
    <property type="molecule type" value="Genomic_DNA"/>
</dbReference>
<dbReference type="EMBL" id="AY339548">
    <property type="protein sequence ID" value="AAP90944.1"/>
    <property type="molecule type" value="Genomic_DNA"/>
</dbReference>
<dbReference type="EMBL" id="AY339549">
    <property type="protein sequence ID" value="AAP90957.1"/>
    <property type="molecule type" value="Genomic_DNA"/>
</dbReference>
<dbReference type="EMBL" id="AY339550">
    <property type="protein sequence ID" value="AAP90970.1"/>
    <property type="molecule type" value="Genomic_DNA"/>
</dbReference>
<dbReference type="EMBL" id="AY339554">
    <property type="protein sequence ID" value="AAP91022.1"/>
    <property type="molecule type" value="Genomic_DNA"/>
</dbReference>
<dbReference type="EMBL" id="AY339555">
    <property type="protein sequence ID" value="AAP91035.1"/>
    <property type="molecule type" value="Genomic_DNA"/>
</dbReference>
<dbReference type="EMBL" id="AY339556">
    <property type="protein sequence ID" value="AAP91048.1"/>
    <property type="molecule type" value="Genomic_DNA"/>
</dbReference>
<dbReference type="EMBL" id="AY339557">
    <property type="protein sequence ID" value="AAP91061.1"/>
    <property type="molecule type" value="Genomic_DNA"/>
</dbReference>
<dbReference type="EMBL" id="AY339558">
    <property type="protein sequence ID" value="AAP91074.1"/>
    <property type="molecule type" value="Genomic_DNA"/>
</dbReference>
<dbReference type="EMBL" id="AY339559">
    <property type="protein sequence ID" value="AAP91087.1"/>
    <property type="molecule type" value="Genomic_DNA"/>
</dbReference>
<dbReference type="EMBL" id="AY339560">
    <property type="protein sequence ID" value="AAP91100.1"/>
    <property type="molecule type" value="Genomic_DNA"/>
</dbReference>
<dbReference type="EMBL" id="AY339563">
    <property type="protein sequence ID" value="AAP91139.1"/>
    <property type="molecule type" value="Genomic_DNA"/>
</dbReference>
<dbReference type="EMBL" id="AY339564">
    <property type="protein sequence ID" value="AAP91152.1"/>
    <property type="molecule type" value="Genomic_DNA"/>
</dbReference>
<dbReference type="EMBL" id="AY339565">
    <property type="protein sequence ID" value="AAP91165.1"/>
    <property type="molecule type" value="Genomic_DNA"/>
</dbReference>
<dbReference type="EMBL" id="AY339566">
    <property type="protein sequence ID" value="AAP91178.1"/>
    <property type="molecule type" value="Genomic_DNA"/>
</dbReference>
<dbReference type="EMBL" id="AY339567">
    <property type="protein sequence ID" value="AAP91191.1"/>
    <property type="molecule type" value="Genomic_DNA"/>
</dbReference>
<dbReference type="EMBL" id="AY339568">
    <property type="protein sequence ID" value="AAP91204.1"/>
    <property type="molecule type" value="Genomic_DNA"/>
</dbReference>
<dbReference type="EMBL" id="AY339569">
    <property type="protein sequence ID" value="AAP91217.1"/>
    <property type="molecule type" value="Genomic_DNA"/>
</dbReference>
<dbReference type="EMBL" id="AY339570">
    <property type="protein sequence ID" value="AAP91230.1"/>
    <property type="molecule type" value="Genomic_DNA"/>
</dbReference>
<dbReference type="EMBL" id="AY339571">
    <property type="protein sequence ID" value="AAP91243.1"/>
    <property type="molecule type" value="Genomic_DNA"/>
</dbReference>
<dbReference type="EMBL" id="AY339572">
    <property type="protein sequence ID" value="AAP91256.1"/>
    <property type="molecule type" value="Genomic_DNA"/>
</dbReference>
<dbReference type="EMBL" id="AY339573">
    <property type="protein sequence ID" value="AAP91269.1"/>
    <property type="molecule type" value="Genomic_DNA"/>
</dbReference>
<dbReference type="EMBL" id="AY339574">
    <property type="protein sequence ID" value="AAP91282.1"/>
    <property type="molecule type" value="Genomic_DNA"/>
</dbReference>
<dbReference type="EMBL" id="AY339575">
    <property type="protein sequence ID" value="AAP91295.1"/>
    <property type="molecule type" value="Genomic_DNA"/>
</dbReference>
<dbReference type="EMBL" id="AY339576">
    <property type="protein sequence ID" value="AAP91308.1"/>
    <property type="molecule type" value="Genomic_DNA"/>
</dbReference>
<dbReference type="EMBL" id="AF346970">
    <property type="protein sequence ID" value="AAK17308.1"/>
    <property type="molecule type" value="Genomic_DNA"/>
</dbReference>
<dbReference type="EMBL" id="AF346971">
    <property type="protein sequence ID" value="AAK17321.1"/>
    <property type="molecule type" value="Genomic_DNA"/>
</dbReference>
<dbReference type="EMBL" id="AF346972">
    <property type="protein sequence ID" value="AAK17334.1"/>
    <property type="molecule type" value="Genomic_DNA"/>
</dbReference>
<dbReference type="EMBL" id="AF346976">
    <property type="protein sequence ID" value="AAK17386.1"/>
    <property type="molecule type" value="Genomic_DNA"/>
</dbReference>
<dbReference type="EMBL" id="AF346977">
    <property type="protein sequence ID" value="AAK17399.1"/>
    <property type="molecule type" value="Genomic_DNA"/>
</dbReference>
<dbReference type="EMBL" id="AF346979">
    <property type="protein sequence ID" value="AAK17425.1"/>
    <property type="molecule type" value="Genomic_DNA"/>
</dbReference>
<dbReference type="EMBL" id="AF346980">
    <property type="protein sequence ID" value="AAK17438.1"/>
    <property type="molecule type" value="Genomic_DNA"/>
</dbReference>
<dbReference type="EMBL" id="AF346981">
    <property type="protein sequence ID" value="AAK17451.1"/>
    <property type="molecule type" value="Genomic_DNA"/>
</dbReference>
<dbReference type="EMBL" id="AF346982">
    <property type="protein sequence ID" value="AAK17464.1"/>
    <property type="molecule type" value="Genomic_DNA"/>
</dbReference>
<dbReference type="EMBL" id="AF346984">
    <property type="protein sequence ID" value="AAK17490.1"/>
    <property type="molecule type" value="Genomic_DNA"/>
</dbReference>
<dbReference type="EMBL" id="AF346988">
    <property type="protein sequence ID" value="AAK17542.1"/>
    <property type="molecule type" value="Genomic_DNA"/>
</dbReference>
<dbReference type="EMBL" id="AF346989">
    <property type="protein sequence ID" value="AAK17555.1"/>
    <property type="molecule type" value="Genomic_DNA"/>
</dbReference>
<dbReference type="EMBL" id="AF346990">
    <property type="protein sequence ID" value="AAK17568.1"/>
    <property type="molecule type" value="Genomic_DNA"/>
</dbReference>
<dbReference type="EMBL" id="AF346991">
    <property type="protein sequence ID" value="AAK17581.1"/>
    <property type="molecule type" value="Genomic_DNA"/>
</dbReference>
<dbReference type="EMBL" id="AF346993">
    <property type="protein sequence ID" value="AAK17607.1"/>
    <property type="molecule type" value="Genomic_DNA"/>
</dbReference>
<dbReference type="EMBL" id="AF346994">
    <property type="protein sequence ID" value="AAK17620.1"/>
    <property type="molecule type" value="Genomic_DNA"/>
</dbReference>
<dbReference type="EMBL" id="AF347000">
    <property type="protein sequence ID" value="AAK17698.1"/>
    <property type="molecule type" value="Genomic_DNA"/>
</dbReference>
<dbReference type="EMBL" id="AF347001">
    <property type="protein sequence ID" value="AAK17711.1"/>
    <property type="molecule type" value="Genomic_DNA"/>
</dbReference>
<dbReference type="EMBL" id="AF347006">
    <property type="protein sequence ID" value="AAK17776.1"/>
    <property type="molecule type" value="Genomic_DNA"/>
</dbReference>
<dbReference type="EMBL" id="AF347007">
    <property type="protein sequence ID" value="AAK17789.1"/>
    <property type="molecule type" value="Genomic_DNA"/>
</dbReference>
<dbReference type="EMBL" id="AF347010">
    <property type="protein sequence ID" value="AAK17828.1"/>
    <property type="molecule type" value="Genomic_DNA"/>
</dbReference>
<dbReference type="EMBL" id="AF347011">
    <property type="protein sequence ID" value="AAK17841.1"/>
    <property type="molecule type" value="Genomic_DNA"/>
</dbReference>
<dbReference type="EMBL" id="AF347012">
    <property type="protein sequence ID" value="AAK17854.1"/>
    <property type="molecule type" value="Genomic_DNA"/>
</dbReference>
<dbReference type="EMBL" id="AF347013">
    <property type="protein sequence ID" value="AAK17867.1"/>
    <property type="molecule type" value="Genomic_DNA"/>
</dbReference>
<dbReference type="EMBL" id="AY289051">
    <property type="protein sequence ID" value="AAP47890.1"/>
    <property type="molecule type" value="Genomic_DNA"/>
</dbReference>
<dbReference type="EMBL" id="AY289053">
    <property type="protein sequence ID" value="AAP47916.1"/>
    <property type="molecule type" value="Genomic_DNA"/>
</dbReference>
<dbReference type="EMBL" id="AY289056">
    <property type="protein sequence ID" value="AAP47955.1"/>
    <property type="molecule type" value="Genomic_DNA"/>
</dbReference>
<dbReference type="EMBL" id="AY289057">
    <property type="protein sequence ID" value="AAP47968.1"/>
    <property type="molecule type" value="Genomic_DNA"/>
</dbReference>
<dbReference type="EMBL" id="AY289058">
    <property type="protein sequence ID" value="AAP47981.1"/>
    <property type="molecule type" value="Genomic_DNA"/>
</dbReference>
<dbReference type="EMBL" id="AY289061">
    <property type="protein sequence ID" value="AAP48020.1"/>
    <property type="molecule type" value="Genomic_DNA"/>
</dbReference>
<dbReference type="EMBL" id="AY289062">
    <property type="protein sequence ID" value="AAP48033.1"/>
    <property type="molecule type" value="Genomic_DNA"/>
</dbReference>
<dbReference type="EMBL" id="AY289064">
    <property type="protein sequence ID" value="AAP48059.1"/>
    <property type="molecule type" value="Genomic_DNA"/>
</dbReference>
<dbReference type="EMBL" id="AY289066">
    <property type="protein sequence ID" value="AAP48085.1"/>
    <property type="molecule type" value="Genomic_DNA"/>
</dbReference>
<dbReference type="EMBL" id="AY289067">
    <property type="protein sequence ID" value="AAP48098.1"/>
    <property type="molecule type" value="Genomic_DNA"/>
</dbReference>
<dbReference type="EMBL" id="AY289068">
    <property type="protein sequence ID" value="AAP48111.1"/>
    <property type="molecule type" value="Genomic_DNA"/>
</dbReference>
<dbReference type="EMBL" id="AY289069">
    <property type="protein sequence ID" value="AAP48124.1"/>
    <property type="molecule type" value="Genomic_DNA"/>
</dbReference>
<dbReference type="EMBL" id="AY289070">
    <property type="protein sequence ID" value="AAP48137.1"/>
    <property type="molecule type" value="Genomic_DNA"/>
</dbReference>
<dbReference type="EMBL" id="AY289072">
    <property type="protein sequence ID" value="AAP48163.1"/>
    <property type="molecule type" value="Genomic_DNA"/>
</dbReference>
<dbReference type="EMBL" id="AY289076">
    <property type="protein sequence ID" value="AAP48215.1"/>
    <property type="molecule type" value="Genomic_DNA"/>
</dbReference>
<dbReference type="EMBL" id="AY289077">
    <property type="protein sequence ID" value="AAP48228.1"/>
    <property type="molecule type" value="Genomic_DNA"/>
</dbReference>
<dbReference type="EMBL" id="AY289080">
    <property type="protein sequence ID" value="AAP48267.1"/>
    <property type="molecule type" value="Genomic_DNA"/>
</dbReference>
<dbReference type="EMBL" id="AY289083">
    <property type="protein sequence ID" value="AAP48306.1"/>
    <property type="molecule type" value="Genomic_DNA"/>
</dbReference>
<dbReference type="EMBL" id="AY289084">
    <property type="protein sequence ID" value="AAP48319.1"/>
    <property type="molecule type" value="Genomic_DNA"/>
</dbReference>
<dbReference type="EMBL" id="AY289088">
    <property type="protein sequence ID" value="AAP48371.1"/>
    <property type="molecule type" value="Genomic_DNA"/>
</dbReference>
<dbReference type="EMBL" id="AY289093">
    <property type="protein sequence ID" value="AAP48435.1"/>
    <property type="molecule type" value="Genomic_DNA"/>
</dbReference>
<dbReference type="EMBL" id="AY289094">
    <property type="protein sequence ID" value="AAP48448.1"/>
    <property type="molecule type" value="Genomic_DNA"/>
</dbReference>
<dbReference type="EMBL" id="AY289097">
    <property type="protein sequence ID" value="AAP48487.1"/>
    <property type="molecule type" value="Genomic_DNA"/>
</dbReference>
<dbReference type="EMBL" id="AY289098">
    <property type="protein sequence ID" value="AAP48500.1"/>
    <property type="molecule type" value="Genomic_DNA"/>
</dbReference>
<dbReference type="EMBL" id="AY289100">
    <property type="protein sequence ID" value="AAP48526.1"/>
    <property type="molecule type" value="Genomic_DNA"/>
</dbReference>
<dbReference type="EMBL" id="AY289101">
    <property type="protein sequence ID" value="AAP48539.1"/>
    <property type="molecule type" value="Genomic_DNA"/>
</dbReference>
<dbReference type="EMBL" id="AY289102">
    <property type="protein sequence ID" value="AAP48552.1"/>
    <property type="molecule type" value="Genomic_DNA"/>
</dbReference>
<dbReference type="EMBL" id="AY495090">
    <property type="protein sequence ID" value="AAR92506.1"/>
    <property type="molecule type" value="Genomic_DNA"/>
</dbReference>
<dbReference type="EMBL" id="AY495091">
    <property type="protein sequence ID" value="AAR92519.1"/>
    <property type="molecule type" value="Genomic_DNA"/>
</dbReference>
<dbReference type="EMBL" id="AY495092">
    <property type="protein sequence ID" value="AAR92532.1"/>
    <property type="molecule type" value="Genomic_DNA"/>
</dbReference>
<dbReference type="EMBL" id="AY495094">
    <property type="protein sequence ID" value="AAR92558.1"/>
    <property type="molecule type" value="Genomic_DNA"/>
</dbReference>
<dbReference type="EMBL" id="AY495095">
    <property type="protein sequence ID" value="AAR92571.1"/>
    <property type="molecule type" value="Genomic_DNA"/>
</dbReference>
<dbReference type="EMBL" id="AY495097">
    <property type="protein sequence ID" value="AAR92597.1"/>
    <property type="molecule type" value="Genomic_DNA"/>
</dbReference>
<dbReference type="EMBL" id="AY495098">
    <property type="protein sequence ID" value="AAR92610.1"/>
    <property type="molecule type" value="Genomic_DNA"/>
</dbReference>
<dbReference type="EMBL" id="AY495099">
    <property type="protein sequence ID" value="AAR92623.1"/>
    <property type="molecule type" value="Genomic_DNA"/>
</dbReference>
<dbReference type="EMBL" id="AY495100">
    <property type="protein sequence ID" value="AAR92636.1"/>
    <property type="molecule type" value="Genomic_DNA"/>
</dbReference>
<dbReference type="EMBL" id="AY495101">
    <property type="protein sequence ID" value="AAR92649.1"/>
    <property type="molecule type" value="Genomic_DNA"/>
</dbReference>
<dbReference type="EMBL" id="AY495102">
    <property type="protein sequence ID" value="AAR92662.1"/>
    <property type="molecule type" value="Genomic_DNA"/>
</dbReference>
<dbReference type="EMBL" id="AY495103">
    <property type="protein sequence ID" value="AAR92675.1"/>
    <property type="molecule type" value="Genomic_DNA"/>
</dbReference>
<dbReference type="EMBL" id="AY495104">
    <property type="protein sequence ID" value="AAR92688.1"/>
    <property type="molecule type" value="Genomic_DNA"/>
</dbReference>
<dbReference type="EMBL" id="AY495105">
    <property type="protein sequence ID" value="AAR92701.1"/>
    <property type="molecule type" value="Genomic_DNA"/>
</dbReference>
<dbReference type="EMBL" id="AY495107">
    <property type="protein sequence ID" value="AAR92727.1"/>
    <property type="molecule type" value="Genomic_DNA"/>
</dbReference>
<dbReference type="EMBL" id="AY495108">
    <property type="protein sequence ID" value="AAR92740.1"/>
    <property type="molecule type" value="Genomic_DNA"/>
</dbReference>
<dbReference type="EMBL" id="AY495109">
    <property type="protein sequence ID" value="AAR92753.1"/>
    <property type="molecule type" value="Genomic_DNA"/>
</dbReference>
<dbReference type="EMBL" id="AY495110">
    <property type="protein sequence ID" value="AAR92766.1"/>
    <property type="molecule type" value="Genomic_DNA"/>
</dbReference>
<dbReference type="EMBL" id="AY495111">
    <property type="protein sequence ID" value="AAR92779.1"/>
    <property type="molecule type" value="Genomic_DNA"/>
</dbReference>
<dbReference type="EMBL" id="AY495112">
    <property type="protein sequence ID" value="AAR92792.1"/>
    <property type="molecule type" value="Genomic_DNA"/>
</dbReference>
<dbReference type="EMBL" id="AY495113">
    <property type="protein sequence ID" value="AAR92805.1"/>
    <property type="molecule type" value="Genomic_DNA"/>
</dbReference>
<dbReference type="EMBL" id="AY495114">
    <property type="protein sequence ID" value="AAR92818.1"/>
    <property type="molecule type" value="Genomic_DNA"/>
</dbReference>
<dbReference type="EMBL" id="AY495115">
    <property type="protein sequence ID" value="AAR92831.1"/>
    <property type="molecule type" value="Genomic_DNA"/>
</dbReference>
<dbReference type="EMBL" id="AY495117">
    <property type="protein sequence ID" value="AAR92857.1"/>
    <property type="molecule type" value="Genomic_DNA"/>
</dbReference>
<dbReference type="EMBL" id="AY495118">
    <property type="protein sequence ID" value="AAR92870.1"/>
    <property type="molecule type" value="Genomic_DNA"/>
</dbReference>
<dbReference type="EMBL" id="AY495119">
    <property type="protein sequence ID" value="AAR92883.1"/>
    <property type="molecule type" value="Genomic_DNA"/>
</dbReference>
<dbReference type="EMBL" id="AY495120">
    <property type="protein sequence ID" value="AAR92896.1"/>
    <property type="molecule type" value="Genomic_DNA"/>
</dbReference>
<dbReference type="EMBL" id="AY495121">
    <property type="protein sequence ID" value="AAR92909.1"/>
    <property type="molecule type" value="Genomic_DNA"/>
</dbReference>
<dbReference type="EMBL" id="AY495122">
    <property type="protein sequence ID" value="AAR92922.1"/>
    <property type="molecule type" value="Genomic_DNA"/>
</dbReference>
<dbReference type="EMBL" id="AY495123">
    <property type="protein sequence ID" value="AAR92935.1"/>
    <property type="molecule type" value="Genomic_DNA"/>
</dbReference>
<dbReference type="EMBL" id="AY495124">
    <property type="protein sequence ID" value="AAR92948.1"/>
    <property type="molecule type" value="Genomic_DNA"/>
</dbReference>
<dbReference type="EMBL" id="AY495125">
    <property type="protein sequence ID" value="AAR92961.1"/>
    <property type="molecule type" value="Genomic_DNA"/>
</dbReference>
<dbReference type="EMBL" id="AY495126">
    <property type="protein sequence ID" value="AAR92974.1"/>
    <property type="molecule type" value="Genomic_DNA"/>
</dbReference>
<dbReference type="EMBL" id="AY495127">
    <property type="protein sequence ID" value="AAR92987.1"/>
    <property type="molecule type" value="Genomic_DNA"/>
</dbReference>
<dbReference type="EMBL" id="AY495128">
    <property type="protein sequence ID" value="AAR93000.1"/>
    <property type="molecule type" value="Genomic_DNA"/>
</dbReference>
<dbReference type="EMBL" id="AY495129">
    <property type="protein sequence ID" value="AAR93013.1"/>
    <property type="molecule type" value="Genomic_DNA"/>
</dbReference>
<dbReference type="EMBL" id="AY495130">
    <property type="protein sequence ID" value="AAR93026.1"/>
    <property type="molecule type" value="Genomic_DNA"/>
</dbReference>
<dbReference type="EMBL" id="AY495131">
    <property type="protein sequence ID" value="AAR93039.1"/>
    <property type="molecule type" value="Genomic_DNA"/>
</dbReference>
<dbReference type="EMBL" id="AY495132">
    <property type="protein sequence ID" value="AAR93052.1"/>
    <property type="molecule type" value="Genomic_DNA"/>
</dbReference>
<dbReference type="EMBL" id="AY495133">
    <property type="protein sequence ID" value="AAR93065.1"/>
    <property type="molecule type" value="Genomic_DNA"/>
</dbReference>
<dbReference type="EMBL" id="AY495134">
    <property type="protein sequence ID" value="AAR93078.1"/>
    <property type="molecule type" value="Genomic_DNA"/>
</dbReference>
<dbReference type="EMBL" id="AY495135">
    <property type="protein sequence ID" value="AAR93091.1"/>
    <property type="molecule type" value="Genomic_DNA"/>
</dbReference>
<dbReference type="EMBL" id="AY495136">
    <property type="protein sequence ID" value="AAR93104.1"/>
    <property type="molecule type" value="Genomic_DNA"/>
</dbReference>
<dbReference type="EMBL" id="AY495137">
    <property type="protein sequence ID" value="AAR93117.1"/>
    <property type="molecule type" value="Genomic_DNA"/>
</dbReference>
<dbReference type="EMBL" id="AY495138">
    <property type="protein sequence ID" value="AAR93130.1"/>
    <property type="molecule type" value="Genomic_DNA"/>
</dbReference>
<dbReference type="EMBL" id="AY495139">
    <property type="protein sequence ID" value="AAR93143.1"/>
    <property type="molecule type" value="Genomic_DNA"/>
</dbReference>
<dbReference type="EMBL" id="AY495140">
    <property type="protein sequence ID" value="AAR93156.1"/>
    <property type="molecule type" value="Genomic_DNA"/>
</dbReference>
<dbReference type="EMBL" id="AY495141">
    <property type="protein sequence ID" value="AAR93169.1"/>
    <property type="molecule type" value="Genomic_DNA"/>
</dbReference>
<dbReference type="EMBL" id="AY495142">
    <property type="protein sequence ID" value="AAR93182.1"/>
    <property type="molecule type" value="Genomic_DNA"/>
</dbReference>
<dbReference type="EMBL" id="AY495143">
    <property type="protein sequence ID" value="AAR93195.1"/>
    <property type="molecule type" value="Genomic_DNA"/>
</dbReference>
<dbReference type="EMBL" id="AY495144">
    <property type="protein sequence ID" value="AAR93208.1"/>
    <property type="molecule type" value="Genomic_DNA"/>
</dbReference>
<dbReference type="EMBL" id="AY495145">
    <property type="protein sequence ID" value="AAR93221.1"/>
    <property type="molecule type" value="Genomic_DNA"/>
</dbReference>
<dbReference type="EMBL" id="AY495146">
    <property type="protein sequence ID" value="AAR93234.1"/>
    <property type="molecule type" value="Genomic_DNA"/>
</dbReference>
<dbReference type="EMBL" id="AY495147">
    <property type="protein sequence ID" value="AAR93247.1"/>
    <property type="molecule type" value="Genomic_DNA"/>
</dbReference>
<dbReference type="EMBL" id="AY495148">
    <property type="protein sequence ID" value="AAR93260.1"/>
    <property type="molecule type" value="Genomic_DNA"/>
</dbReference>
<dbReference type="EMBL" id="AY495149">
    <property type="protein sequence ID" value="AAR93273.1"/>
    <property type="molecule type" value="Genomic_DNA"/>
</dbReference>
<dbReference type="EMBL" id="AY495150">
    <property type="protein sequence ID" value="AAR93286.1"/>
    <property type="molecule type" value="Genomic_DNA"/>
</dbReference>
<dbReference type="EMBL" id="AY495151">
    <property type="protein sequence ID" value="AAR93299.1"/>
    <property type="molecule type" value="Genomic_DNA"/>
</dbReference>
<dbReference type="EMBL" id="AY495152">
    <property type="protein sequence ID" value="AAR93312.1"/>
    <property type="molecule type" value="Genomic_DNA"/>
</dbReference>
<dbReference type="EMBL" id="AY495154">
    <property type="protein sequence ID" value="AAR93338.1"/>
    <property type="molecule type" value="Genomic_DNA"/>
</dbReference>
<dbReference type="EMBL" id="AY495155">
    <property type="protein sequence ID" value="AAR93351.1"/>
    <property type="molecule type" value="Genomic_DNA"/>
</dbReference>
<dbReference type="EMBL" id="AY495156">
    <property type="protein sequence ID" value="AAR93364.1"/>
    <property type="molecule type" value="Genomic_DNA"/>
</dbReference>
<dbReference type="EMBL" id="AY495157">
    <property type="protein sequence ID" value="AAR93377.1"/>
    <property type="molecule type" value="Genomic_DNA"/>
</dbReference>
<dbReference type="EMBL" id="AY495158">
    <property type="protein sequence ID" value="AAR93390.1"/>
    <property type="molecule type" value="Genomic_DNA"/>
</dbReference>
<dbReference type="EMBL" id="AY495159">
    <property type="protein sequence ID" value="AAR93403.1"/>
    <property type="molecule type" value="Genomic_DNA"/>
</dbReference>
<dbReference type="EMBL" id="AY495160">
    <property type="protein sequence ID" value="AAR93416.1"/>
    <property type="molecule type" value="Genomic_DNA"/>
</dbReference>
<dbReference type="EMBL" id="AY495161">
    <property type="protein sequence ID" value="AAR93429.1"/>
    <property type="molecule type" value="Genomic_DNA"/>
</dbReference>
<dbReference type="EMBL" id="AY495162">
    <property type="protein sequence ID" value="AAR93442.1"/>
    <property type="molecule type" value="Genomic_DNA"/>
</dbReference>
<dbReference type="EMBL" id="AY495163">
    <property type="protein sequence ID" value="AAR93455.1"/>
    <property type="molecule type" value="Genomic_DNA"/>
</dbReference>
<dbReference type="EMBL" id="AY495164">
    <property type="protein sequence ID" value="AAR93468.1"/>
    <property type="molecule type" value="Genomic_DNA"/>
</dbReference>
<dbReference type="EMBL" id="AY495165">
    <property type="protein sequence ID" value="AAR93481.1"/>
    <property type="molecule type" value="Genomic_DNA"/>
</dbReference>
<dbReference type="EMBL" id="AY495166">
    <property type="protein sequence ID" value="AAR93494.1"/>
    <property type="molecule type" value="Genomic_DNA"/>
</dbReference>
<dbReference type="EMBL" id="AY495167">
    <property type="protein sequence ID" value="AAR93507.1"/>
    <property type="molecule type" value="Genomic_DNA"/>
</dbReference>
<dbReference type="EMBL" id="AY495168">
    <property type="protein sequence ID" value="AAR93520.1"/>
    <property type="molecule type" value="Genomic_DNA"/>
</dbReference>
<dbReference type="EMBL" id="AY495169">
    <property type="protein sequence ID" value="AAR93533.1"/>
    <property type="molecule type" value="Genomic_DNA"/>
</dbReference>
<dbReference type="EMBL" id="AY495170">
    <property type="protein sequence ID" value="AAR93546.1"/>
    <property type="molecule type" value="Genomic_DNA"/>
</dbReference>
<dbReference type="EMBL" id="AY495171">
    <property type="protein sequence ID" value="AAR93559.1"/>
    <property type="molecule type" value="Genomic_DNA"/>
</dbReference>
<dbReference type="EMBL" id="AY495172">
    <property type="protein sequence ID" value="AAR93572.1"/>
    <property type="molecule type" value="Genomic_DNA"/>
</dbReference>
<dbReference type="EMBL" id="AY495173">
    <property type="protein sequence ID" value="AAR93585.1"/>
    <property type="molecule type" value="Genomic_DNA"/>
</dbReference>
<dbReference type="EMBL" id="AY495174">
    <property type="protein sequence ID" value="AAR93598.1"/>
    <property type="molecule type" value="Genomic_DNA"/>
</dbReference>
<dbReference type="EMBL" id="AY495175">
    <property type="protein sequence ID" value="AAR93611.1"/>
    <property type="molecule type" value="Genomic_DNA"/>
</dbReference>
<dbReference type="EMBL" id="AY495176">
    <property type="protein sequence ID" value="AAR93624.1"/>
    <property type="molecule type" value="Genomic_DNA"/>
</dbReference>
<dbReference type="EMBL" id="AY495177">
    <property type="protein sequence ID" value="AAR93637.1"/>
    <property type="molecule type" value="Genomic_DNA"/>
</dbReference>
<dbReference type="EMBL" id="AY495178">
    <property type="protein sequence ID" value="AAR93650.1"/>
    <property type="molecule type" value="Genomic_DNA"/>
</dbReference>
<dbReference type="EMBL" id="AY495179">
    <property type="protein sequence ID" value="AAR93663.1"/>
    <property type="molecule type" value="Genomic_DNA"/>
</dbReference>
<dbReference type="EMBL" id="AY495180">
    <property type="protein sequence ID" value="AAR93676.1"/>
    <property type="molecule type" value="Genomic_DNA"/>
</dbReference>
<dbReference type="EMBL" id="AY495181">
    <property type="protein sequence ID" value="AAR93689.1"/>
    <property type="molecule type" value="Genomic_DNA"/>
</dbReference>
<dbReference type="EMBL" id="AY495182">
    <property type="protein sequence ID" value="AAR93702.1"/>
    <property type="molecule type" value="Genomic_DNA"/>
</dbReference>
<dbReference type="EMBL" id="AY495183">
    <property type="protein sequence ID" value="AAR93715.1"/>
    <property type="molecule type" value="Genomic_DNA"/>
</dbReference>
<dbReference type="EMBL" id="AY495184">
    <property type="protein sequence ID" value="AAR93728.1"/>
    <property type="molecule type" value="Genomic_DNA"/>
</dbReference>
<dbReference type="EMBL" id="AY495185">
    <property type="protein sequence ID" value="AAR93741.1"/>
    <property type="molecule type" value="Genomic_DNA"/>
</dbReference>
<dbReference type="EMBL" id="AY495186">
    <property type="protein sequence ID" value="AAR93754.1"/>
    <property type="molecule type" value="Genomic_DNA"/>
</dbReference>
<dbReference type="EMBL" id="AY495187">
    <property type="protein sequence ID" value="AAR93767.1"/>
    <property type="molecule type" value="Genomic_DNA"/>
</dbReference>
<dbReference type="EMBL" id="AY495188">
    <property type="protein sequence ID" value="AAR93780.1"/>
    <property type="molecule type" value="Genomic_DNA"/>
</dbReference>
<dbReference type="EMBL" id="AY495189">
    <property type="protein sequence ID" value="AAR93793.1"/>
    <property type="molecule type" value="Genomic_DNA"/>
</dbReference>
<dbReference type="EMBL" id="AY495190">
    <property type="protein sequence ID" value="AAR93806.1"/>
    <property type="molecule type" value="Genomic_DNA"/>
</dbReference>
<dbReference type="EMBL" id="AY495191">
    <property type="protein sequence ID" value="AAR93819.1"/>
    <property type="molecule type" value="Genomic_DNA"/>
</dbReference>
<dbReference type="EMBL" id="AY495192">
    <property type="protein sequence ID" value="AAR93832.1"/>
    <property type="molecule type" value="Genomic_DNA"/>
</dbReference>
<dbReference type="EMBL" id="AY495193">
    <property type="protein sequence ID" value="AAR93845.1"/>
    <property type="molecule type" value="Genomic_DNA"/>
</dbReference>
<dbReference type="EMBL" id="AY495194">
    <property type="protein sequence ID" value="AAR93858.1"/>
    <property type="molecule type" value="Genomic_DNA"/>
</dbReference>
<dbReference type="EMBL" id="AY495239">
    <property type="protein sequence ID" value="AAR94443.1"/>
    <property type="molecule type" value="Genomic_DNA"/>
</dbReference>
<dbReference type="EMBL" id="AY495240">
    <property type="protein sequence ID" value="AAR94456.1"/>
    <property type="molecule type" value="Genomic_DNA"/>
</dbReference>
<dbReference type="EMBL" id="AY495241">
    <property type="protein sequence ID" value="AAR94469.1"/>
    <property type="molecule type" value="Genomic_DNA"/>
</dbReference>
<dbReference type="EMBL" id="AY495242">
    <property type="protein sequence ID" value="AAR94482.1"/>
    <property type="molecule type" value="Genomic_DNA"/>
</dbReference>
<dbReference type="EMBL" id="AY495243">
    <property type="protein sequence ID" value="AAR94495.1"/>
    <property type="molecule type" value="Genomic_DNA"/>
</dbReference>
<dbReference type="EMBL" id="AY495244">
    <property type="protein sequence ID" value="AAR94508.1"/>
    <property type="molecule type" value="Genomic_DNA"/>
</dbReference>
<dbReference type="EMBL" id="AY495245">
    <property type="protein sequence ID" value="AAR94521.1"/>
    <property type="molecule type" value="Genomic_DNA"/>
</dbReference>
<dbReference type="EMBL" id="AY495246">
    <property type="protein sequence ID" value="AAR94534.1"/>
    <property type="molecule type" value="Genomic_DNA"/>
</dbReference>
<dbReference type="EMBL" id="AY495247">
    <property type="protein sequence ID" value="AAR94547.1"/>
    <property type="molecule type" value="Genomic_DNA"/>
</dbReference>
<dbReference type="EMBL" id="AY495248">
    <property type="protein sequence ID" value="AAR94560.1"/>
    <property type="molecule type" value="Genomic_DNA"/>
</dbReference>
<dbReference type="EMBL" id="AY495250">
    <property type="protein sequence ID" value="AAR94586.1"/>
    <property type="molecule type" value="Genomic_DNA"/>
</dbReference>
<dbReference type="EMBL" id="AY495251">
    <property type="protein sequence ID" value="AAR94599.1"/>
    <property type="molecule type" value="Genomic_DNA"/>
</dbReference>
<dbReference type="EMBL" id="AY495252">
    <property type="protein sequence ID" value="AAR94612.1"/>
    <property type="molecule type" value="Genomic_DNA"/>
</dbReference>
<dbReference type="EMBL" id="AY495253">
    <property type="protein sequence ID" value="AAR94625.1"/>
    <property type="molecule type" value="Genomic_DNA"/>
</dbReference>
<dbReference type="EMBL" id="AY495254">
    <property type="protein sequence ID" value="AAR94638.1"/>
    <property type="molecule type" value="Genomic_DNA"/>
</dbReference>
<dbReference type="EMBL" id="AY495255">
    <property type="protein sequence ID" value="AAR94651.1"/>
    <property type="molecule type" value="Genomic_DNA"/>
</dbReference>
<dbReference type="EMBL" id="AY495257">
    <property type="protein sequence ID" value="AAR94677.1"/>
    <property type="molecule type" value="Genomic_DNA"/>
</dbReference>
<dbReference type="EMBL" id="AY495259">
    <property type="protein sequence ID" value="AAR94703.1"/>
    <property type="molecule type" value="Genomic_DNA"/>
</dbReference>
<dbReference type="EMBL" id="AY495261">
    <property type="protein sequence ID" value="AAR94729.1"/>
    <property type="molecule type" value="Genomic_DNA"/>
</dbReference>
<dbReference type="EMBL" id="AY495262">
    <property type="protein sequence ID" value="AAR94742.1"/>
    <property type="molecule type" value="Genomic_DNA"/>
</dbReference>
<dbReference type="EMBL" id="AY495263">
    <property type="protein sequence ID" value="AAR94755.1"/>
    <property type="molecule type" value="Genomic_DNA"/>
</dbReference>
<dbReference type="EMBL" id="AY495266">
    <property type="protein sequence ID" value="AAR94794.1"/>
    <property type="molecule type" value="Genomic_DNA"/>
</dbReference>
<dbReference type="EMBL" id="AY495267">
    <property type="protein sequence ID" value="AAR94807.1"/>
    <property type="molecule type" value="Genomic_DNA"/>
</dbReference>
<dbReference type="EMBL" id="AY495268">
    <property type="protein sequence ID" value="AAR94820.1"/>
    <property type="molecule type" value="Genomic_DNA"/>
</dbReference>
<dbReference type="EMBL" id="AY495269">
    <property type="protein sequence ID" value="AAR94833.1"/>
    <property type="molecule type" value="Genomic_DNA"/>
</dbReference>
<dbReference type="EMBL" id="AY495270">
    <property type="protein sequence ID" value="AAR94846.1"/>
    <property type="molecule type" value="Genomic_DNA"/>
</dbReference>
<dbReference type="EMBL" id="AY495271">
    <property type="protein sequence ID" value="AAR94859.1"/>
    <property type="molecule type" value="Genomic_DNA"/>
</dbReference>
<dbReference type="EMBL" id="AY495272">
    <property type="protein sequence ID" value="AAR94872.1"/>
    <property type="molecule type" value="Genomic_DNA"/>
</dbReference>
<dbReference type="EMBL" id="AY495273">
    <property type="protein sequence ID" value="AAR94885.1"/>
    <property type="molecule type" value="Genomic_DNA"/>
</dbReference>
<dbReference type="EMBL" id="AY495274">
    <property type="protein sequence ID" value="AAR94898.1"/>
    <property type="molecule type" value="Genomic_DNA"/>
</dbReference>
<dbReference type="EMBL" id="AY495275">
    <property type="protein sequence ID" value="AAR94911.1"/>
    <property type="molecule type" value="Genomic_DNA"/>
</dbReference>
<dbReference type="EMBL" id="AY495276">
    <property type="protein sequence ID" value="AAR94924.1"/>
    <property type="molecule type" value="Genomic_DNA"/>
</dbReference>
<dbReference type="EMBL" id="AY495277">
    <property type="protein sequence ID" value="AAR94937.1"/>
    <property type="molecule type" value="Genomic_DNA"/>
</dbReference>
<dbReference type="EMBL" id="AY495278">
    <property type="protein sequence ID" value="AAR94950.1"/>
    <property type="molecule type" value="Genomic_DNA"/>
</dbReference>
<dbReference type="EMBL" id="AY495279">
    <property type="protein sequence ID" value="AAR94963.1"/>
    <property type="molecule type" value="Genomic_DNA"/>
</dbReference>
<dbReference type="EMBL" id="AY495280">
    <property type="protein sequence ID" value="AAR94976.1"/>
    <property type="molecule type" value="Genomic_DNA"/>
</dbReference>
<dbReference type="EMBL" id="AY495282">
    <property type="protein sequence ID" value="AAR95002.1"/>
    <property type="molecule type" value="Genomic_DNA"/>
</dbReference>
<dbReference type="EMBL" id="AY495283">
    <property type="protein sequence ID" value="AAR95015.1"/>
    <property type="molecule type" value="Genomic_DNA"/>
</dbReference>
<dbReference type="EMBL" id="AY495284">
    <property type="protein sequence ID" value="AAR95028.1"/>
    <property type="molecule type" value="Genomic_DNA"/>
</dbReference>
<dbReference type="EMBL" id="AY495285">
    <property type="protein sequence ID" value="AAR95041.1"/>
    <property type="molecule type" value="Genomic_DNA"/>
</dbReference>
<dbReference type="EMBL" id="AY495286">
    <property type="protein sequence ID" value="AAR95054.1"/>
    <property type="molecule type" value="Genomic_DNA"/>
</dbReference>
<dbReference type="EMBL" id="AY495287">
    <property type="protein sequence ID" value="AAR95067.1"/>
    <property type="molecule type" value="Genomic_DNA"/>
</dbReference>
<dbReference type="EMBL" id="AY495288">
    <property type="protein sequence ID" value="AAR95080.1"/>
    <property type="molecule type" value="Genomic_DNA"/>
</dbReference>
<dbReference type="EMBL" id="AY495289">
    <property type="protein sequence ID" value="AAR95093.1"/>
    <property type="molecule type" value="Genomic_DNA"/>
</dbReference>
<dbReference type="EMBL" id="AY495290">
    <property type="protein sequence ID" value="AAR95106.1"/>
    <property type="molecule type" value="Genomic_DNA"/>
</dbReference>
<dbReference type="EMBL" id="AY495291">
    <property type="protein sequence ID" value="AAR95119.1"/>
    <property type="molecule type" value="Genomic_DNA"/>
</dbReference>
<dbReference type="EMBL" id="AY495292">
    <property type="protein sequence ID" value="AAR95132.1"/>
    <property type="molecule type" value="Genomic_DNA"/>
</dbReference>
<dbReference type="EMBL" id="AY495293">
    <property type="protein sequence ID" value="AAR95145.1"/>
    <property type="molecule type" value="Genomic_DNA"/>
</dbReference>
<dbReference type="EMBL" id="AY495294">
    <property type="protein sequence ID" value="AAR95158.1"/>
    <property type="molecule type" value="Genomic_DNA"/>
</dbReference>
<dbReference type="EMBL" id="AY495295">
    <property type="protein sequence ID" value="AAR95171.1"/>
    <property type="molecule type" value="Genomic_DNA"/>
</dbReference>
<dbReference type="EMBL" id="AY495296">
    <property type="protein sequence ID" value="AAR95184.1"/>
    <property type="molecule type" value="Genomic_DNA"/>
</dbReference>
<dbReference type="EMBL" id="AY495297">
    <property type="protein sequence ID" value="AAR95197.1"/>
    <property type="molecule type" value="Genomic_DNA"/>
</dbReference>
<dbReference type="EMBL" id="AY495298">
    <property type="protein sequence ID" value="AAR95210.1"/>
    <property type="molecule type" value="Genomic_DNA"/>
</dbReference>
<dbReference type="EMBL" id="AY495299">
    <property type="protein sequence ID" value="AAR95223.1"/>
    <property type="molecule type" value="Genomic_DNA"/>
</dbReference>
<dbReference type="EMBL" id="AY495300">
    <property type="protein sequence ID" value="AAR95236.1"/>
    <property type="molecule type" value="Genomic_DNA"/>
</dbReference>
<dbReference type="EMBL" id="AY495301">
    <property type="protein sequence ID" value="AAR95249.1"/>
    <property type="molecule type" value="Genomic_DNA"/>
</dbReference>
<dbReference type="EMBL" id="AY495302">
    <property type="protein sequence ID" value="AAR95262.1"/>
    <property type="molecule type" value="Genomic_DNA"/>
</dbReference>
<dbReference type="EMBL" id="AY495303">
    <property type="protein sequence ID" value="AAR95275.1"/>
    <property type="molecule type" value="Genomic_DNA"/>
</dbReference>
<dbReference type="EMBL" id="AY495304">
    <property type="protein sequence ID" value="AAR95288.1"/>
    <property type="molecule type" value="Genomic_DNA"/>
</dbReference>
<dbReference type="EMBL" id="AY495305">
    <property type="protein sequence ID" value="AAR95301.1"/>
    <property type="molecule type" value="Genomic_DNA"/>
</dbReference>
<dbReference type="EMBL" id="AY495306">
    <property type="protein sequence ID" value="AAR95314.1"/>
    <property type="molecule type" value="Genomic_DNA"/>
</dbReference>
<dbReference type="EMBL" id="AY495307">
    <property type="protein sequence ID" value="AAR95327.1"/>
    <property type="molecule type" value="Genomic_DNA"/>
</dbReference>
<dbReference type="EMBL" id="AY495308">
    <property type="protein sequence ID" value="AAR95340.1"/>
    <property type="molecule type" value="Genomic_DNA"/>
</dbReference>
<dbReference type="EMBL" id="AY495309">
    <property type="protein sequence ID" value="AAR95353.1"/>
    <property type="molecule type" value="Genomic_DNA"/>
</dbReference>
<dbReference type="EMBL" id="AY495311">
    <property type="protein sequence ID" value="AAR95379.1"/>
    <property type="molecule type" value="Genomic_DNA"/>
</dbReference>
<dbReference type="EMBL" id="AY495312">
    <property type="protein sequence ID" value="AAR95392.1"/>
    <property type="molecule type" value="Genomic_DNA"/>
</dbReference>
<dbReference type="EMBL" id="AY495315">
    <property type="protein sequence ID" value="AAR95431.1"/>
    <property type="molecule type" value="Genomic_DNA"/>
</dbReference>
<dbReference type="EMBL" id="AY495316">
    <property type="protein sequence ID" value="AAR95444.1"/>
    <property type="molecule type" value="Genomic_DNA"/>
</dbReference>
<dbReference type="EMBL" id="AY495318">
    <property type="protein sequence ID" value="AAR95470.1"/>
    <property type="molecule type" value="Genomic_DNA"/>
</dbReference>
<dbReference type="EMBL" id="AY495320">
    <property type="protein sequence ID" value="AAR95496.1"/>
    <property type="molecule type" value="Genomic_DNA"/>
</dbReference>
<dbReference type="EMBL" id="AY495321">
    <property type="protein sequence ID" value="AAR95509.1"/>
    <property type="molecule type" value="Genomic_DNA"/>
</dbReference>
<dbReference type="EMBL" id="AY495324">
    <property type="protein sequence ID" value="AAR95548.1"/>
    <property type="molecule type" value="Genomic_DNA"/>
</dbReference>
<dbReference type="EMBL" id="AY495325">
    <property type="protein sequence ID" value="AAR95561.1"/>
    <property type="molecule type" value="Genomic_DNA"/>
</dbReference>
<dbReference type="EMBL" id="AY495326">
    <property type="protein sequence ID" value="AAR95574.1"/>
    <property type="molecule type" value="Genomic_DNA"/>
</dbReference>
<dbReference type="EMBL" id="AY495327">
    <property type="protein sequence ID" value="AAR95587.1"/>
    <property type="molecule type" value="Genomic_DNA"/>
</dbReference>
<dbReference type="EMBL" id="AY495328">
    <property type="protein sequence ID" value="AAR95600.1"/>
    <property type="molecule type" value="Genomic_DNA"/>
</dbReference>
<dbReference type="EMBL" id="AY495330">
    <property type="protein sequence ID" value="AAR95626.1"/>
    <property type="molecule type" value="Genomic_DNA"/>
</dbReference>
<dbReference type="PIR" id="A00446">
    <property type="entry name" value="DNHUN5"/>
</dbReference>
<dbReference type="RefSeq" id="YP_003024036.1">
    <property type="nucleotide sequence ID" value="NC_012920.1"/>
</dbReference>
<dbReference type="PDB" id="5XTC">
    <property type="method" value="EM"/>
    <property type="resolution" value="3.70 A"/>
    <property type="chains" value="l=1-603"/>
</dbReference>
<dbReference type="PDB" id="5XTD">
    <property type="method" value="EM"/>
    <property type="resolution" value="3.70 A"/>
    <property type="chains" value="l=1-603"/>
</dbReference>
<dbReference type="PDB" id="5XTH">
    <property type="method" value="EM"/>
    <property type="resolution" value="3.90 A"/>
    <property type="chains" value="l=1-603"/>
</dbReference>
<dbReference type="PDB" id="5XTI">
    <property type="method" value="EM"/>
    <property type="resolution" value="17.40 A"/>
    <property type="chains" value="Bl/l=1-603"/>
</dbReference>
<dbReference type="PDBsum" id="5XTC"/>
<dbReference type="PDBsum" id="5XTD"/>
<dbReference type="PDBsum" id="5XTH"/>
<dbReference type="PDBsum" id="5XTI"/>
<dbReference type="SMR" id="P03915"/>
<dbReference type="BioGRID" id="110636">
    <property type="interactions" value="83"/>
</dbReference>
<dbReference type="ComplexPortal" id="CPX-577">
    <property type="entry name" value="Mitochondrial respiratory chain complex I"/>
</dbReference>
<dbReference type="CORUM" id="P03915"/>
<dbReference type="FunCoup" id="P03915">
    <property type="interactions" value="577"/>
</dbReference>
<dbReference type="IntAct" id="P03915">
    <property type="interactions" value="53"/>
</dbReference>
<dbReference type="MINT" id="P03915"/>
<dbReference type="STRING" id="9606.ENSP00000354813"/>
<dbReference type="BindingDB" id="P03915"/>
<dbReference type="ChEMBL" id="CHEMBL2363065"/>
<dbReference type="DrugBank" id="DB00157">
    <property type="generic name" value="NADH"/>
</dbReference>
<dbReference type="DrugCentral" id="P03915"/>
<dbReference type="GlyGen" id="P03915">
    <property type="glycosylation" value="2 sites, 1 O-linked glycan (1 site)"/>
</dbReference>
<dbReference type="iPTMnet" id="P03915"/>
<dbReference type="PhosphoSitePlus" id="P03915"/>
<dbReference type="SwissPalm" id="P03915"/>
<dbReference type="BioMuta" id="MT-ND5"/>
<dbReference type="DMDM" id="6648059"/>
<dbReference type="jPOST" id="P03915"/>
<dbReference type="MassIVE" id="P03915"/>
<dbReference type="PaxDb" id="9606-ENSP00000354813"/>
<dbReference type="PeptideAtlas" id="P03915"/>
<dbReference type="ProteomicsDB" id="51616"/>
<dbReference type="Pumba" id="P03915"/>
<dbReference type="Antibodypedia" id="35363">
    <property type="antibodies" value="244 antibodies from 29 providers"/>
</dbReference>
<dbReference type="DNASU" id="4540"/>
<dbReference type="Ensembl" id="ENST00000361567.2">
    <property type="protein sequence ID" value="ENSP00000354813.2"/>
    <property type="gene ID" value="ENSG00000198786.2"/>
</dbReference>
<dbReference type="GeneID" id="4540"/>
<dbReference type="KEGG" id="hsa:4540"/>
<dbReference type="AGR" id="HGNC:7461"/>
<dbReference type="CTD" id="4540"/>
<dbReference type="DisGeNET" id="4540"/>
<dbReference type="GeneCards" id="MT-ND5"/>
<dbReference type="GeneReviews" id="MT-ND5"/>
<dbReference type="HGNC" id="HGNC:7461">
    <property type="gene designation" value="MT-ND5"/>
</dbReference>
<dbReference type="HPA" id="ENSG00000198786">
    <property type="expression patterns" value="Tissue enhanced (heart muscle, skeletal muscle)"/>
</dbReference>
<dbReference type="MalaCards" id="MT-ND5"/>
<dbReference type="MIM" id="256000">
    <property type="type" value="phenotype"/>
</dbReference>
<dbReference type="MIM" id="516005">
    <property type="type" value="gene"/>
</dbReference>
<dbReference type="MIM" id="535000">
    <property type="type" value="phenotype"/>
</dbReference>
<dbReference type="MIM" id="540000">
    <property type="type" value="phenotype"/>
</dbReference>
<dbReference type="neXtProt" id="NX_P03915"/>
<dbReference type="OpenTargets" id="ENSG00000198786"/>
<dbReference type="Orphanet" id="104">
    <property type="disease" value="Leber hereditary optic neuropathy"/>
</dbReference>
<dbReference type="Orphanet" id="550">
    <property type="disease" value="MELAS"/>
</dbReference>
<dbReference type="Orphanet" id="551">
    <property type="disease" value="MERRF"/>
</dbReference>
<dbReference type="Orphanet" id="255210">
    <property type="disease" value="Mitochondrial DNA-associated Leigh syndrome"/>
</dbReference>
<dbReference type="VEuPathDB" id="HostDB:ENSG00000198786"/>
<dbReference type="eggNOG" id="KOG4668">
    <property type="taxonomic scope" value="Eukaryota"/>
</dbReference>
<dbReference type="GeneTree" id="ENSGT00730000111303"/>
<dbReference type="HOGENOM" id="CLU_007100_6_0_1"/>
<dbReference type="InParanoid" id="P03915"/>
<dbReference type="OMA" id="GVGIMSF"/>
<dbReference type="PAN-GO" id="P03915">
    <property type="GO annotations" value="3 GO annotations based on evolutionary models"/>
</dbReference>
<dbReference type="PhylomeDB" id="P03915"/>
<dbReference type="TreeFam" id="TF342974"/>
<dbReference type="BioCyc" id="MetaCyc:HS00035-MONOMER"/>
<dbReference type="PathwayCommons" id="P03915"/>
<dbReference type="Reactome" id="R-HSA-611105">
    <property type="pathway name" value="Respiratory electron transport"/>
</dbReference>
<dbReference type="Reactome" id="R-HSA-6799198">
    <property type="pathway name" value="Complex I biogenesis"/>
</dbReference>
<dbReference type="Reactome" id="R-HSA-9837999">
    <property type="pathway name" value="Mitochondrial protein degradation"/>
</dbReference>
<dbReference type="SignaLink" id="P03915"/>
<dbReference type="SIGNOR" id="P03915"/>
<dbReference type="BioGRID-ORCS" id="4540">
    <property type="hits" value="0 hits in 3 CRISPR screens"/>
</dbReference>
<dbReference type="ChiTaRS" id="MT-ND5">
    <property type="organism name" value="human"/>
</dbReference>
<dbReference type="GenomeRNAi" id="4540"/>
<dbReference type="Pharos" id="P03915">
    <property type="development level" value="Tclin"/>
</dbReference>
<dbReference type="PRO" id="PR:P03915"/>
<dbReference type="Proteomes" id="UP000005640">
    <property type="component" value="Mitochondrion MT"/>
</dbReference>
<dbReference type="RNAct" id="P03915">
    <property type="molecule type" value="protein"/>
</dbReference>
<dbReference type="Bgee" id="ENSG00000198786">
    <property type="expression patterns" value="Expressed in nasal cavity epithelium and 178 other cell types or tissues"/>
</dbReference>
<dbReference type="ExpressionAtlas" id="P03915">
    <property type="expression patterns" value="baseline and differential"/>
</dbReference>
<dbReference type="GO" id="GO:0005743">
    <property type="term" value="C:mitochondrial inner membrane"/>
    <property type="evidence" value="ECO:0000314"/>
    <property type="project" value="ComplexPortal"/>
</dbReference>
<dbReference type="GO" id="GO:0005739">
    <property type="term" value="C:mitochondrion"/>
    <property type="evidence" value="ECO:0006056"/>
    <property type="project" value="FlyBase"/>
</dbReference>
<dbReference type="GO" id="GO:0045271">
    <property type="term" value="C:respiratory chain complex I"/>
    <property type="evidence" value="ECO:0000314"/>
    <property type="project" value="UniProtKB"/>
</dbReference>
<dbReference type="GO" id="GO:0008137">
    <property type="term" value="F:NADH dehydrogenase (ubiquinone) activity"/>
    <property type="evidence" value="ECO:0000315"/>
    <property type="project" value="UniProtKB"/>
</dbReference>
<dbReference type="GO" id="GO:0009060">
    <property type="term" value="P:aerobic respiration"/>
    <property type="evidence" value="ECO:0000303"/>
    <property type="project" value="ComplexPortal"/>
</dbReference>
<dbReference type="GO" id="GO:0015990">
    <property type="term" value="P:electron transport coupled proton transport"/>
    <property type="evidence" value="ECO:0000318"/>
    <property type="project" value="GO_Central"/>
</dbReference>
<dbReference type="GO" id="GO:0006120">
    <property type="term" value="P:mitochondrial electron transport, NADH to ubiquinone"/>
    <property type="evidence" value="ECO:0000315"/>
    <property type="project" value="UniProtKB"/>
</dbReference>
<dbReference type="GO" id="GO:0032981">
    <property type="term" value="P:mitochondrial respiratory chain complex I assembly"/>
    <property type="evidence" value="ECO:0000315"/>
    <property type="project" value="UniProtKB"/>
</dbReference>
<dbReference type="GO" id="GO:0042776">
    <property type="term" value="P:proton motive force-driven mitochondrial ATP synthesis"/>
    <property type="evidence" value="ECO:0000303"/>
    <property type="project" value="ComplexPortal"/>
</dbReference>
<dbReference type="GO" id="GO:0042542">
    <property type="term" value="P:response to hydrogen peroxide"/>
    <property type="evidence" value="ECO:0007669"/>
    <property type="project" value="Ensembl"/>
</dbReference>
<dbReference type="GO" id="GO:0001666">
    <property type="term" value="P:response to hypoxia"/>
    <property type="evidence" value="ECO:0007669"/>
    <property type="project" value="Ensembl"/>
</dbReference>
<dbReference type="InterPro" id="IPR010934">
    <property type="entry name" value="NADH_DH_su5_C"/>
</dbReference>
<dbReference type="InterPro" id="IPR018393">
    <property type="entry name" value="NADHpl_OxRdtase_5_subgr"/>
</dbReference>
<dbReference type="InterPro" id="IPR001750">
    <property type="entry name" value="ND/Mrp_TM"/>
</dbReference>
<dbReference type="InterPro" id="IPR003945">
    <property type="entry name" value="NU5C-like"/>
</dbReference>
<dbReference type="InterPro" id="IPR001516">
    <property type="entry name" value="Proton_antipo_N"/>
</dbReference>
<dbReference type="NCBIfam" id="TIGR01974">
    <property type="entry name" value="NDH_I_L"/>
    <property type="match status" value="1"/>
</dbReference>
<dbReference type="PANTHER" id="PTHR42829">
    <property type="entry name" value="NADH-UBIQUINONE OXIDOREDUCTASE CHAIN 5"/>
    <property type="match status" value="1"/>
</dbReference>
<dbReference type="PANTHER" id="PTHR42829:SF2">
    <property type="entry name" value="NADH-UBIQUINONE OXIDOREDUCTASE CHAIN 5"/>
    <property type="match status" value="1"/>
</dbReference>
<dbReference type="Pfam" id="PF06455">
    <property type="entry name" value="NADH5_C"/>
    <property type="match status" value="1"/>
</dbReference>
<dbReference type="Pfam" id="PF00361">
    <property type="entry name" value="Proton_antipo_M"/>
    <property type="match status" value="1"/>
</dbReference>
<dbReference type="Pfam" id="PF00662">
    <property type="entry name" value="Proton_antipo_N"/>
    <property type="match status" value="1"/>
</dbReference>
<dbReference type="PRINTS" id="PR01434">
    <property type="entry name" value="NADHDHGNASE5"/>
</dbReference>
<accession>P03915</accession>
<accession>Q34773</accession>
<accession>Q8WCY3</accession>
<organism>
    <name type="scientific">Homo sapiens</name>
    <name type="common">Human</name>
    <dbReference type="NCBI Taxonomy" id="9606"/>
    <lineage>
        <taxon>Eukaryota</taxon>
        <taxon>Metazoa</taxon>
        <taxon>Chordata</taxon>
        <taxon>Craniata</taxon>
        <taxon>Vertebrata</taxon>
        <taxon>Euteleostomi</taxon>
        <taxon>Mammalia</taxon>
        <taxon>Eutheria</taxon>
        <taxon>Euarchontoglires</taxon>
        <taxon>Primates</taxon>
        <taxon>Haplorrhini</taxon>
        <taxon>Catarrhini</taxon>
        <taxon>Hominidae</taxon>
        <taxon>Homo</taxon>
    </lineage>
</organism>